<dbReference type="EC" id="2.7.7.6" evidence="38 46 50 66"/>
<dbReference type="EC" id="3.1.13.-" evidence="64"/>
<dbReference type="EC" id="2.7.7.48" evidence="36"/>
<dbReference type="EMBL" id="X63564">
    <property type="protein sequence ID" value="CAA45125.1"/>
    <property type="molecule type" value="mRNA"/>
</dbReference>
<dbReference type="EMBL" id="X74874">
    <property type="protein sequence ID" value="CAA52862.1"/>
    <property type="molecule type" value="Genomic_DNA"/>
</dbReference>
<dbReference type="EMBL" id="X74873">
    <property type="protein sequence ID" value="CAA52862.1"/>
    <property type="status" value="JOINED"/>
    <property type="molecule type" value="Genomic_DNA"/>
</dbReference>
<dbReference type="EMBL" id="X74872">
    <property type="protein sequence ID" value="CAA52862.1"/>
    <property type="status" value="JOINED"/>
    <property type="molecule type" value="Genomic_DNA"/>
</dbReference>
<dbReference type="EMBL" id="X74871">
    <property type="protein sequence ID" value="CAA52862.1"/>
    <property type="status" value="JOINED"/>
    <property type="molecule type" value="Genomic_DNA"/>
</dbReference>
<dbReference type="EMBL" id="X74870">
    <property type="protein sequence ID" value="CAA52862.1"/>
    <property type="status" value="JOINED"/>
    <property type="molecule type" value="Genomic_DNA"/>
</dbReference>
<dbReference type="EMBL" id="AC113189">
    <property type="status" value="NOT_ANNOTATED_CDS"/>
    <property type="molecule type" value="Genomic_DNA"/>
</dbReference>
<dbReference type="EMBL" id="CH471108">
    <property type="protein sequence ID" value="EAW90181.1"/>
    <property type="molecule type" value="Genomic_DNA"/>
</dbReference>
<dbReference type="EMBL" id="BC067295">
    <property type="protein sequence ID" value="AAH67295.1"/>
    <property type="molecule type" value="mRNA"/>
</dbReference>
<dbReference type="EMBL" id="BC137231">
    <property type="protein sequence ID" value="AAI37232.1"/>
    <property type="molecule type" value="mRNA"/>
</dbReference>
<dbReference type="PIR" id="I38186">
    <property type="entry name" value="I38186"/>
</dbReference>
<dbReference type="PIR" id="S21054">
    <property type="entry name" value="S21054"/>
</dbReference>
<dbReference type="RefSeq" id="NP_000928.1">
    <property type="nucleotide sequence ID" value="NM_000937.4"/>
</dbReference>
<dbReference type="PDB" id="2GHQ">
    <property type="method" value="X-ray"/>
    <property type="resolution" value="2.05 A"/>
    <property type="chains" value="C/D=1795-1803"/>
</dbReference>
<dbReference type="PDB" id="2GHT">
    <property type="method" value="X-ray"/>
    <property type="resolution" value="1.80 A"/>
    <property type="chains" value="C/D=1796-1803"/>
</dbReference>
<dbReference type="PDB" id="2LTO">
    <property type="method" value="NMR"/>
    <property type="chains" value="B=1804-1816"/>
</dbReference>
<dbReference type="PDB" id="3D9K">
    <property type="method" value="X-ray"/>
    <property type="resolution" value="2.20 A"/>
    <property type="chains" value="Y/Z=1790-1803"/>
</dbReference>
<dbReference type="PDB" id="3D9L">
    <property type="method" value="X-ray"/>
    <property type="resolution" value="2.20 A"/>
    <property type="chains" value="Y/Z=1790-1803"/>
</dbReference>
<dbReference type="PDB" id="3D9M">
    <property type="method" value="X-ray"/>
    <property type="resolution" value="1.75 A"/>
    <property type="chains" value="Y/Z=1790-1803"/>
</dbReference>
<dbReference type="PDB" id="3D9N">
    <property type="method" value="X-ray"/>
    <property type="resolution" value="1.60 A"/>
    <property type="chains" value="Y/Z=1790-1803"/>
</dbReference>
<dbReference type="PDB" id="3D9O">
    <property type="method" value="X-ray"/>
    <property type="resolution" value="2.00 A"/>
    <property type="chains" value="Z=1790-1803"/>
</dbReference>
<dbReference type="PDB" id="3D9P">
    <property type="method" value="X-ray"/>
    <property type="resolution" value="2.10 A"/>
    <property type="chains" value="Y/Z=1790-1803"/>
</dbReference>
<dbReference type="PDB" id="4JXT">
    <property type="method" value="X-ray"/>
    <property type="resolution" value="1.90 A"/>
    <property type="chains" value="B=1787-1805"/>
</dbReference>
<dbReference type="PDB" id="5IY6">
    <property type="method" value="EM"/>
    <property type="resolution" value="7.20 A"/>
    <property type="chains" value="A=1-1970"/>
</dbReference>
<dbReference type="PDB" id="5IY7">
    <property type="method" value="EM"/>
    <property type="resolution" value="8.60 A"/>
    <property type="chains" value="A=1-1970"/>
</dbReference>
<dbReference type="PDB" id="5IY8">
    <property type="method" value="EM"/>
    <property type="resolution" value="7.90 A"/>
    <property type="chains" value="A=1-1970"/>
</dbReference>
<dbReference type="PDB" id="5IY9">
    <property type="method" value="EM"/>
    <property type="resolution" value="6.30 A"/>
    <property type="chains" value="A=1-1970"/>
</dbReference>
<dbReference type="PDB" id="5IYA">
    <property type="method" value="EM"/>
    <property type="resolution" value="5.40 A"/>
    <property type="chains" value="A=1-1970"/>
</dbReference>
<dbReference type="PDB" id="5IYB">
    <property type="method" value="EM"/>
    <property type="resolution" value="3.90 A"/>
    <property type="chains" value="A=1-1970"/>
</dbReference>
<dbReference type="PDB" id="5IYC">
    <property type="method" value="EM"/>
    <property type="resolution" value="3.90 A"/>
    <property type="chains" value="A=1-1970"/>
</dbReference>
<dbReference type="PDB" id="5IYD">
    <property type="method" value="EM"/>
    <property type="resolution" value="3.90 A"/>
    <property type="chains" value="A=1-1970"/>
</dbReference>
<dbReference type="PDB" id="5M3H">
    <property type="method" value="X-ray"/>
    <property type="resolution" value="2.50 A"/>
    <property type="chains" value="X/Y=1713-1740"/>
</dbReference>
<dbReference type="PDB" id="5M3J">
    <property type="method" value="X-ray"/>
    <property type="resolution" value="3.50 A"/>
    <property type="chains" value="X=1713-1740"/>
</dbReference>
<dbReference type="PDB" id="6DRD">
    <property type="method" value="EM"/>
    <property type="resolution" value="3.90 A"/>
    <property type="chains" value="A=1-1970"/>
</dbReference>
<dbReference type="PDB" id="6F5P">
    <property type="method" value="X-ray"/>
    <property type="resolution" value="4.14 A"/>
    <property type="chains" value="G=1713-1740"/>
</dbReference>
<dbReference type="PDB" id="6G0R">
    <property type="method" value="X-ray"/>
    <property type="resolution" value="1.25 A"/>
    <property type="chains" value="C=772-782"/>
</dbReference>
<dbReference type="PDB" id="6IC8">
    <property type="method" value="X-ray"/>
    <property type="resolution" value="1.93 A"/>
    <property type="chains" value="C/D=1790-1803"/>
</dbReference>
<dbReference type="PDB" id="6IC9">
    <property type="method" value="X-ray"/>
    <property type="resolution" value="1.75 A"/>
    <property type="chains" value="C/D=1790-1803"/>
</dbReference>
<dbReference type="PDB" id="6O9L">
    <property type="method" value="EM"/>
    <property type="resolution" value="7.20 A"/>
    <property type="chains" value="A=1-1970"/>
</dbReference>
<dbReference type="PDB" id="6Q5Y">
    <property type="method" value="X-ray"/>
    <property type="resolution" value="2.85 A"/>
    <property type="chains" value="E/F=1790-1803"/>
</dbReference>
<dbReference type="PDB" id="6XKB">
    <property type="method" value="X-ray"/>
    <property type="resolution" value="1.60 A"/>
    <property type="chains" value="F/G/I/J/K=1786-1805"/>
</dbReference>
<dbReference type="PDB" id="6XRE">
    <property type="method" value="EM"/>
    <property type="resolution" value="4.60 A"/>
    <property type="chains" value="A=1-1970"/>
</dbReference>
<dbReference type="PDB" id="7EGB">
    <property type="method" value="EM"/>
    <property type="resolution" value="3.30 A"/>
    <property type="chains" value="o=1-1970"/>
</dbReference>
<dbReference type="PDB" id="7EGC">
    <property type="method" value="EM"/>
    <property type="resolution" value="3.90 A"/>
    <property type="chains" value="o=1-1970"/>
</dbReference>
<dbReference type="PDB" id="7LBM">
    <property type="method" value="EM"/>
    <property type="resolution" value="4.80 A"/>
    <property type="chains" value="A=1-1970"/>
</dbReference>
<dbReference type="PDB" id="7YCX">
    <property type="method" value="EM"/>
    <property type="resolution" value="4.18 A"/>
    <property type="chains" value="1=1-1970"/>
</dbReference>
<dbReference type="PDB" id="7Z1K">
    <property type="method" value="X-ray"/>
    <property type="resolution" value="1.55 A"/>
    <property type="chains" value="B=1788-1803"/>
</dbReference>
<dbReference type="PDB" id="7Z42">
    <property type="method" value="X-ray"/>
    <property type="resolution" value="2.42 A"/>
    <property type="chains" value="G/I/X/Y=1713-1740"/>
</dbReference>
<dbReference type="PDB" id="8PM0">
    <property type="method" value="EM"/>
    <property type="resolution" value="2.90 A"/>
    <property type="chains" value="G/P=1699-1740"/>
</dbReference>
<dbReference type="PDB" id="8PNP">
    <property type="method" value="EM"/>
    <property type="resolution" value="2.49 A"/>
    <property type="chains" value="G=1699-1740"/>
</dbReference>
<dbReference type="PDB" id="8PNQ">
    <property type="method" value="EM"/>
    <property type="resolution" value="2.88 A"/>
    <property type="chains" value="G=1699-1740"/>
</dbReference>
<dbReference type="PDB" id="8R3K">
    <property type="method" value="EM"/>
    <property type="resolution" value="3.43 A"/>
    <property type="chains" value="G=1699-1740"/>
</dbReference>
<dbReference type="PDB" id="8R3L">
    <property type="method" value="EM"/>
    <property type="resolution" value="3.25 A"/>
    <property type="chains" value="G=1699-1740"/>
</dbReference>
<dbReference type="PDB" id="8R60">
    <property type="method" value="EM"/>
    <property type="resolution" value="3.23 A"/>
    <property type="chains" value="X=1713-1740"/>
</dbReference>
<dbReference type="PDB" id="8R65">
    <property type="method" value="EM"/>
    <property type="resolution" value="4.23 A"/>
    <property type="chains" value="X=1713-1740"/>
</dbReference>
<dbReference type="PDB" id="9B9L">
    <property type="method" value="X-ray"/>
    <property type="resolution" value="2.50 A"/>
    <property type="chains" value="C=1791-1805"/>
</dbReference>
<dbReference type="PDB" id="9EHZ">
    <property type="method" value="EM"/>
    <property type="resolution" value="2.60 A"/>
    <property type="chains" value="A=1-1970"/>
</dbReference>
<dbReference type="PDB" id="9EI1">
    <property type="method" value="EM"/>
    <property type="resolution" value="3.20 A"/>
    <property type="chains" value="A=1-1970"/>
</dbReference>
<dbReference type="PDB" id="9EI2">
    <property type="method" value="EM"/>
    <property type="resolution" value="2.80 A"/>
    <property type="chains" value="A=1-1970"/>
</dbReference>
<dbReference type="PDB" id="9EI3">
    <property type="method" value="EM"/>
    <property type="resolution" value="3.20 A"/>
    <property type="chains" value="A=1-1970"/>
</dbReference>
<dbReference type="PDB" id="9EI4">
    <property type="method" value="EM"/>
    <property type="resolution" value="3.70 A"/>
    <property type="chains" value="A=1-1970"/>
</dbReference>
<dbReference type="PDBsum" id="2GHQ"/>
<dbReference type="PDBsum" id="2GHT"/>
<dbReference type="PDBsum" id="2LTO"/>
<dbReference type="PDBsum" id="3D9K"/>
<dbReference type="PDBsum" id="3D9L"/>
<dbReference type="PDBsum" id="3D9M"/>
<dbReference type="PDBsum" id="3D9N"/>
<dbReference type="PDBsum" id="3D9O"/>
<dbReference type="PDBsum" id="3D9P"/>
<dbReference type="PDBsum" id="4JXT"/>
<dbReference type="PDBsum" id="5IY6"/>
<dbReference type="PDBsum" id="5IY7"/>
<dbReference type="PDBsum" id="5IY8"/>
<dbReference type="PDBsum" id="5IY9"/>
<dbReference type="PDBsum" id="5IYA"/>
<dbReference type="PDBsum" id="5IYB"/>
<dbReference type="PDBsum" id="5IYC"/>
<dbReference type="PDBsum" id="5IYD"/>
<dbReference type="PDBsum" id="5M3H"/>
<dbReference type="PDBsum" id="5M3J"/>
<dbReference type="PDBsum" id="6DRD"/>
<dbReference type="PDBsum" id="6F5P"/>
<dbReference type="PDBsum" id="6G0R"/>
<dbReference type="PDBsum" id="6IC8"/>
<dbReference type="PDBsum" id="6IC9"/>
<dbReference type="PDBsum" id="6O9L"/>
<dbReference type="PDBsum" id="6Q5Y"/>
<dbReference type="PDBsum" id="6XKB"/>
<dbReference type="PDBsum" id="6XRE"/>
<dbReference type="PDBsum" id="7EGB"/>
<dbReference type="PDBsum" id="7EGC"/>
<dbReference type="PDBsum" id="7LBM"/>
<dbReference type="PDBsum" id="7YCX"/>
<dbReference type="PDBsum" id="7Z1K"/>
<dbReference type="PDBsum" id="7Z42"/>
<dbReference type="PDBsum" id="8PM0"/>
<dbReference type="PDBsum" id="8PNP"/>
<dbReference type="PDBsum" id="8PNQ"/>
<dbReference type="PDBsum" id="8R3K"/>
<dbReference type="PDBsum" id="8R3L"/>
<dbReference type="PDBsum" id="8R60"/>
<dbReference type="PDBsum" id="8R65"/>
<dbReference type="PDBsum" id="9B9L"/>
<dbReference type="PDBsum" id="9EHZ"/>
<dbReference type="PDBsum" id="9EI1"/>
<dbReference type="PDBsum" id="9EI2"/>
<dbReference type="PDBsum" id="9EI3"/>
<dbReference type="PDBsum" id="9EI4"/>
<dbReference type="EMDB" id="EMD-22294"/>
<dbReference type="EMDB" id="EMD-23255"/>
<dbReference type="EMDB" id="EMD-31111"/>
<dbReference type="EMDB" id="EMD-31112"/>
<dbReference type="EMDB" id="EMD-33741"/>
<dbReference type="EMDB" id="EMD-48071"/>
<dbReference type="EMDB" id="EMD-48073"/>
<dbReference type="EMDB" id="EMD-48074"/>
<dbReference type="EMDB" id="EMD-48075"/>
<dbReference type="EMDB" id="EMD-48076"/>
<dbReference type="EMDB" id="EMD-6340"/>
<dbReference type="EMDB" id="EMD-6400"/>
<dbReference type="EMDB" id="EMD-7997"/>
<dbReference type="EMDB" id="EMD-8132"/>
<dbReference type="EMDB" id="EMD-8133"/>
<dbReference type="EMDB" id="EMD-8134"/>
<dbReference type="EMDB" id="EMD-8135"/>
<dbReference type="EMDB" id="EMD-8136"/>
<dbReference type="EMDB" id="EMD-8137"/>
<dbReference type="EMDB" id="EMD-8138"/>
<dbReference type="SMR" id="P24928"/>
<dbReference type="BioGRID" id="111426">
    <property type="interactions" value="525"/>
</dbReference>
<dbReference type="ComplexPortal" id="CPX-2387">
    <property type="entry name" value="DNA-directed RNA polymerase II complex, Pol II(G) variant"/>
</dbReference>
<dbReference type="ComplexPortal" id="CPX-7481">
    <property type="entry name" value="DNA-directed RNA polymerase II complex"/>
</dbReference>
<dbReference type="CORUM" id="P24928"/>
<dbReference type="DIP" id="DIP-29011N"/>
<dbReference type="FunCoup" id="P24928">
    <property type="interactions" value="3228"/>
</dbReference>
<dbReference type="IntAct" id="P24928">
    <property type="interactions" value="204"/>
</dbReference>
<dbReference type="MINT" id="P24928"/>
<dbReference type="STRING" id="9606.ENSP00000461879"/>
<dbReference type="BindingDB" id="P24928"/>
<dbReference type="ChEMBL" id="CHEMBL1641353"/>
<dbReference type="GlyCosmos" id="P24928">
    <property type="glycosylation" value="3 sites, 1 glycan"/>
</dbReference>
<dbReference type="GlyGen" id="P24928">
    <property type="glycosylation" value="10 sites, 1 N-linked glycan (1 site), 1 O-linked glycan (5 sites)"/>
</dbReference>
<dbReference type="iPTMnet" id="P24928"/>
<dbReference type="MetOSite" id="P24928"/>
<dbReference type="PhosphoSitePlus" id="P24928"/>
<dbReference type="SwissPalm" id="P24928"/>
<dbReference type="BioMuta" id="POLR2A"/>
<dbReference type="DMDM" id="281185484"/>
<dbReference type="jPOST" id="P24928"/>
<dbReference type="MassIVE" id="P24928"/>
<dbReference type="PaxDb" id="9606-ENSP00000480158"/>
<dbReference type="PeptideAtlas" id="P24928"/>
<dbReference type="ProteomicsDB" id="54240">
    <molecule id="P24928-1"/>
</dbReference>
<dbReference type="ProteomicsDB" id="66745"/>
<dbReference type="Pumba" id="P24928"/>
<dbReference type="ABCD" id="P24928">
    <property type="antibodies" value="7 sequenced antibodies"/>
</dbReference>
<dbReference type="DNASU" id="5430"/>
<dbReference type="GeneID" id="5430"/>
<dbReference type="KEGG" id="hsa:5430"/>
<dbReference type="UCSC" id="uc002ghe.4">
    <molecule id="P24928-1"/>
    <property type="organism name" value="human"/>
</dbReference>
<dbReference type="AGR" id="HGNC:9187"/>
<dbReference type="CTD" id="5430"/>
<dbReference type="DisGeNET" id="5430"/>
<dbReference type="GeneCards" id="POLR2A"/>
<dbReference type="HGNC" id="HGNC:9187">
    <property type="gene designation" value="POLR2A"/>
</dbReference>
<dbReference type="MalaCards" id="POLR2A"/>
<dbReference type="MIM" id="180660">
    <property type="type" value="gene+phenotype"/>
</dbReference>
<dbReference type="MIM" id="618603">
    <property type="type" value="phenotype"/>
</dbReference>
<dbReference type="neXtProt" id="NX_P24928"/>
<dbReference type="PharmGKB" id="PA33507"/>
<dbReference type="eggNOG" id="KOG0260">
    <property type="taxonomic scope" value="Eukaryota"/>
</dbReference>
<dbReference type="HOGENOM" id="CLU_000487_3_1_1"/>
<dbReference type="InParanoid" id="P24928"/>
<dbReference type="OrthoDB" id="270392at2759"/>
<dbReference type="PAN-GO" id="P24928">
    <property type="GO annotations" value="2 GO annotations based on evolutionary models"/>
</dbReference>
<dbReference type="PhylomeDB" id="P24928"/>
<dbReference type="TreeFam" id="TF103036"/>
<dbReference type="PathwayCommons" id="P24928"/>
<dbReference type="Reactome" id="R-HSA-112382">
    <property type="pathway name" value="Formation of RNA Pol II elongation complex"/>
</dbReference>
<dbReference type="Reactome" id="R-HSA-113418">
    <property type="pathway name" value="Formation of the Early Elongation Complex"/>
</dbReference>
<dbReference type="Reactome" id="R-HSA-167152">
    <property type="pathway name" value="Formation of HIV elongation complex in the absence of HIV Tat"/>
</dbReference>
<dbReference type="Reactome" id="R-HSA-167158">
    <property type="pathway name" value="Formation of the HIV-1 Early Elongation Complex"/>
</dbReference>
<dbReference type="Reactome" id="R-HSA-167160">
    <property type="pathway name" value="RNA Pol II CTD phosphorylation and interaction with CE during HIV infection"/>
</dbReference>
<dbReference type="Reactome" id="R-HSA-167161">
    <property type="pathway name" value="HIV Transcription Initiation"/>
</dbReference>
<dbReference type="Reactome" id="R-HSA-167162">
    <property type="pathway name" value="RNA Polymerase II HIV Promoter Escape"/>
</dbReference>
<dbReference type="Reactome" id="R-HSA-167172">
    <property type="pathway name" value="Transcription of the HIV genome"/>
</dbReference>
<dbReference type="Reactome" id="R-HSA-167200">
    <property type="pathway name" value="Formation of HIV-1 elongation complex containing HIV-1 Tat"/>
</dbReference>
<dbReference type="Reactome" id="R-HSA-167238">
    <property type="pathway name" value="Pausing and recovery of Tat-mediated HIV elongation"/>
</dbReference>
<dbReference type="Reactome" id="R-HSA-167242">
    <property type="pathway name" value="Abortive elongation of HIV-1 transcript in the absence of Tat"/>
</dbReference>
<dbReference type="Reactome" id="R-HSA-167243">
    <property type="pathway name" value="Tat-mediated HIV elongation arrest and recovery"/>
</dbReference>
<dbReference type="Reactome" id="R-HSA-167246">
    <property type="pathway name" value="Tat-mediated elongation of the HIV-1 transcript"/>
</dbReference>
<dbReference type="Reactome" id="R-HSA-167287">
    <property type="pathway name" value="HIV elongation arrest and recovery"/>
</dbReference>
<dbReference type="Reactome" id="R-HSA-167290">
    <property type="pathway name" value="Pausing and recovery of HIV elongation"/>
</dbReference>
<dbReference type="Reactome" id="R-HSA-168325">
    <property type="pathway name" value="Viral Messenger RNA Synthesis"/>
</dbReference>
<dbReference type="Reactome" id="R-HSA-203927">
    <property type="pathway name" value="MicroRNA (miRNA) biogenesis"/>
</dbReference>
<dbReference type="Reactome" id="R-HSA-5578749">
    <property type="pathway name" value="Transcriptional regulation by small RNAs"/>
</dbReference>
<dbReference type="Reactome" id="R-HSA-5601884">
    <property type="pathway name" value="PIWI-interacting RNA (piRNA) biogenesis"/>
</dbReference>
<dbReference type="Reactome" id="R-HSA-5617472">
    <property type="pathway name" value="Activation of anterior HOX genes in hindbrain development during early embryogenesis"/>
</dbReference>
<dbReference type="Reactome" id="R-HSA-674695">
    <property type="pathway name" value="RNA Polymerase II Pre-transcription Events"/>
</dbReference>
<dbReference type="Reactome" id="R-HSA-6781823">
    <property type="pathway name" value="Formation of TC-NER Pre-Incision Complex"/>
</dbReference>
<dbReference type="Reactome" id="R-HSA-6781827">
    <property type="pathway name" value="Transcription-Coupled Nucleotide Excision Repair (TC-NER)"/>
</dbReference>
<dbReference type="Reactome" id="R-HSA-6782135">
    <property type="pathway name" value="Dual incision in TC-NER"/>
</dbReference>
<dbReference type="Reactome" id="R-HSA-6782210">
    <property type="pathway name" value="Gap-filling DNA repair synthesis and ligation in TC-NER"/>
</dbReference>
<dbReference type="Reactome" id="R-HSA-6796648">
    <property type="pathway name" value="TP53 Regulates Transcription of DNA Repair Genes"/>
</dbReference>
<dbReference type="Reactome" id="R-HSA-6803529">
    <property type="pathway name" value="FGFR2 alternative splicing"/>
</dbReference>
<dbReference type="Reactome" id="R-HSA-6807505">
    <property type="pathway name" value="RNA polymerase II transcribes snRNA genes"/>
</dbReference>
<dbReference type="Reactome" id="R-HSA-72086">
    <property type="pathway name" value="mRNA Capping"/>
</dbReference>
<dbReference type="Reactome" id="R-HSA-72163">
    <property type="pathway name" value="mRNA Splicing - Major Pathway"/>
</dbReference>
<dbReference type="Reactome" id="R-HSA-72165">
    <property type="pathway name" value="mRNA Splicing - Minor Pathway"/>
</dbReference>
<dbReference type="Reactome" id="R-HSA-72203">
    <property type="pathway name" value="Processing of Capped Intron-Containing Pre-mRNA"/>
</dbReference>
<dbReference type="Reactome" id="R-HSA-73776">
    <property type="pathway name" value="RNA Polymerase II Promoter Escape"/>
</dbReference>
<dbReference type="Reactome" id="R-HSA-73779">
    <property type="pathway name" value="RNA Polymerase II Transcription Pre-Initiation And Promoter Opening"/>
</dbReference>
<dbReference type="Reactome" id="R-HSA-75953">
    <property type="pathway name" value="RNA Polymerase II Transcription Initiation"/>
</dbReference>
<dbReference type="Reactome" id="R-HSA-75955">
    <property type="pathway name" value="RNA Polymerase II Transcription Elongation"/>
</dbReference>
<dbReference type="Reactome" id="R-HSA-76042">
    <property type="pathway name" value="RNA Polymerase II Transcription Initiation And Promoter Clearance"/>
</dbReference>
<dbReference type="Reactome" id="R-HSA-77075">
    <property type="pathway name" value="RNA Pol II CTD phosphorylation and interaction with CE"/>
</dbReference>
<dbReference type="Reactome" id="R-HSA-8851708">
    <property type="pathway name" value="Signaling by FGFR2 IIIa TM"/>
</dbReference>
<dbReference type="Reactome" id="R-HSA-9018519">
    <property type="pathway name" value="Estrogen-dependent gene expression"/>
</dbReference>
<dbReference type="Reactome" id="R-HSA-9670095">
    <property type="pathway name" value="Inhibition of DNA recombination at telomere"/>
</dbReference>
<dbReference type="SignaLink" id="P24928"/>
<dbReference type="SIGNOR" id="P24928"/>
<dbReference type="BioGRID-ORCS" id="5430">
    <property type="hits" value="833 hits in 1169 CRISPR screens"/>
</dbReference>
<dbReference type="CD-CODE" id="33D42E40">
    <property type="entry name" value="Synthetic Condensate 000271"/>
</dbReference>
<dbReference type="CD-CODE" id="38EC0B30">
    <property type="entry name" value="Transcriptional condensate"/>
</dbReference>
<dbReference type="CD-CODE" id="58F5AC37">
    <property type="entry name" value="Synthetic Condensate 000283"/>
</dbReference>
<dbReference type="CD-CODE" id="6DA31C6B">
    <property type="entry name" value="Synthetic Condensate 000011"/>
</dbReference>
<dbReference type="CD-CODE" id="81D2A7B6">
    <property type="entry name" value="Nuclear stress body"/>
</dbReference>
<dbReference type="CD-CODE" id="8E4C2D28">
    <property type="entry name" value="Synthetic Condensate 000124"/>
</dbReference>
<dbReference type="CD-CODE" id="917A6517">
    <property type="entry name" value="Synthetic Condensate 000120"/>
</dbReference>
<dbReference type="CD-CODE" id="91857CE7">
    <property type="entry name" value="Nucleolus"/>
</dbReference>
<dbReference type="CD-CODE" id="950D9077">
    <property type="entry name" value="Synthetic Condensate 000273"/>
</dbReference>
<dbReference type="CD-CODE" id="C4E5F0B6">
    <property type="entry name" value="Synthetic Condensate 000109"/>
</dbReference>
<dbReference type="CD-CODE" id="D936E305">
    <property type="entry name" value="Synthetic Condensate 000298"/>
</dbReference>
<dbReference type="CD-CODE" id="F4B231E0">
    <property type="entry name" value="Synthetic Condensate 000208"/>
</dbReference>
<dbReference type="ChiTaRS" id="POLR2A">
    <property type="organism name" value="human"/>
</dbReference>
<dbReference type="EvolutionaryTrace" id="P24928"/>
<dbReference type="GeneWiki" id="POLR2A"/>
<dbReference type="GenomeRNAi" id="5430"/>
<dbReference type="Pharos" id="P24928">
    <property type="development level" value="Tbio"/>
</dbReference>
<dbReference type="PRO" id="PR:P24928"/>
<dbReference type="Proteomes" id="UP000005640">
    <property type="component" value="Chromosome 17"/>
</dbReference>
<dbReference type="RNAct" id="P24928">
    <property type="molecule type" value="protein"/>
</dbReference>
<dbReference type="GO" id="GO:0005694">
    <property type="term" value="C:chromosome"/>
    <property type="evidence" value="ECO:0007669"/>
    <property type="project" value="UniProtKB-SubCell"/>
</dbReference>
<dbReference type="GO" id="GO:0005739">
    <property type="term" value="C:mitochondrion"/>
    <property type="evidence" value="ECO:0007669"/>
    <property type="project" value="GOC"/>
</dbReference>
<dbReference type="GO" id="GO:0005654">
    <property type="term" value="C:nucleoplasm"/>
    <property type="evidence" value="ECO:0000304"/>
    <property type="project" value="Reactome"/>
</dbReference>
<dbReference type="GO" id="GO:0005634">
    <property type="term" value="C:nucleus"/>
    <property type="evidence" value="ECO:0000314"/>
    <property type="project" value="UniProtKB"/>
</dbReference>
<dbReference type="GO" id="GO:0005665">
    <property type="term" value="C:RNA polymerase II, core complex"/>
    <property type="evidence" value="ECO:0000314"/>
    <property type="project" value="UniProtKB"/>
</dbReference>
<dbReference type="GO" id="GO:0003677">
    <property type="term" value="F:DNA binding"/>
    <property type="evidence" value="ECO:0000304"/>
    <property type="project" value="ProtInc"/>
</dbReference>
<dbReference type="GO" id="GO:0003899">
    <property type="term" value="F:DNA-directed RNA polymerase activity"/>
    <property type="evidence" value="ECO:0000314"/>
    <property type="project" value="UniProtKB"/>
</dbReference>
<dbReference type="GO" id="GO:0016787">
    <property type="term" value="F:hydrolase activity"/>
    <property type="evidence" value="ECO:0007669"/>
    <property type="project" value="UniProtKB-KW"/>
</dbReference>
<dbReference type="GO" id="GO:0019900">
    <property type="term" value="F:kinase binding"/>
    <property type="evidence" value="ECO:0000353"/>
    <property type="project" value="UniProtKB"/>
</dbReference>
<dbReference type="GO" id="GO:0000287">
    <property type="term" value="F:magnesium ion binding"/>
    <property type="evidence" value="ECO:0000314"/>
    <property type="project" value="UniProtKB"/>
</dbReference>
<dbReference type="GO" id="GO:0050436">
    <property type="term" value="F:microfibril binding"/>
    <property type="evidence" value="ECO:0000314"/>
    <property type="project" value="DisProt"/>
</dbReference>
<dbReference type="GO" id="GO:1990841">
    <property type="term" value="F:promoter-specific chromatin binding"/>
    <property type="evidence" value="ECO:0000314"/>
    <property type="project" value="UniProtKB"/>
</dbReference>
<dbReference type="GO" id="GO:0003723">
    <property type="term" value="F:RNA binding"/>
    <property type="evidence" value="ECO:0007005"/>
    <property type="project" value="UniProtKB"/>
</dbReference>
<dbReference type="GO" id="GO:0003968">
    <property type="term" value="F:RNA-directed RNA polymerase activity"/>
    <property type="evidence" value="ECO:0000314"/>
    <property type="project" value="UniProtKB"/>
</dbReference>
<dbReference type="GO" id="GO:0031625">
    <property type="term" value="F:ubiquitin protein ligase binding"/>
    <property type="evidence" value="ECO:0000353"/>
    <property type="project" value="BHF-UCL"/>
</dbReference>
<dbReference type="GO" id="GO:0008270">
    <property type="term" value="F:zinc ion binding"/>
    <property type="evidence" value="ECO:0000314"/>
    <property type="project" value="UniProtKB"/>
</dbReference>
<dbReference type="GO" id="GO:0006353">
    <property type="term" value="P:DNA-templated transcription termination"/>
    <property type="evidence" value="ECO:0000315"/>
    <property type="project" value="UniProtKB"/>
</dbReference>
<dbReference type="GO" id="GO:0033120">
    <property type="term" value="P:positive regulation of RNA splicing"/>
    <property type="evidence" value="ECO:0000314"/>
    <property type="project" value="UniProtKB"/>
</dbReference>
<dbReference type="GO" id="GO:0006355">
    <property type="term" value="P:regulation of DNA-templated transcription"/>
    <property type="evidence" value="ECO:0000303"/>
    <property type="project" value="UniProtKB"/>
</dbReference>
<dbReference type="GO" id="GO:0006366">
    <property type="term" value="P:transcription by RNA polymerase II"/>
    <property type="evidence" value="ECO:0000314"/>
    <property type="project" value="UniProtKB"/>
</dbReference>
<dbReference type="CDD" id="cd02584">
    <property type="entry name" value="RNAP_II_Rpb1_C"/>
    <property type="match status" value="1"/>
</dbReference>
<dbReference type="CDD" id="cd02733">
    <property type="entry name" value="RNAP_II_RPB1_N"/>
    <property type="match status" value="1"/>
</dbReference>
<dbReference type="DisProt" id="DP01284"/>
<dbReference type="FunFam" id="2.40.40.20:FF:000019">
    <property type="entry name" value="DNA-directed RNA polymerase II subunit RPB1"/>
    <property type="match status" value="1"/>
</dbReference>
<dbReference type="FunFam" id="1.10.132.30:FF:000001">
    <property type="entry name" value="DNA-directed RNA polymerase subunit"/>
    <property type="match status" value="1"/>
</dbReference>
<dbReference type="FunFam" id="1.10.150.390:FF:000001">
    <property type="entry name" value="DNA-directed RNA polymerase subunit"/>
    <property type="match status" value="1"/>
</dbReference>
<dbReference type="FunFam" id="1.10.274.100:FF:000001">
    <property type="entry name" value="DNA-directed RNA polymerase subunit"/>
    <property type="match status" value="1"/>
</dbReference>
<dbReference type="FunFam" id="3.30.1360.140:FF:000001">
    <property type="entry name" value="DNA-directed RNA polymerase subunit"/>
    <property type="match status" value="1"/>
</dbReference>
<dbReference type="FunFam" id="3.30.1490.180:FF:000001">
    <property type="entry name" value="DNA-directed RNA polymerase subunit"/>
    <property type="match status" value="1"/>
</dbReference>
<dbReference type="FunFam" id="4.10.860.120:FF:000002">
    <property type="entry name" value="DNA-directed RNA polymerase subunit"/>
    <property type="match status" value="1"/>
</dbReference>
<dbReference type="FunFam" id="4.10.860.120:FF:000005">
    <property type="entry name" value="DNA-directed RNA polymerase subunit"/>
    <property type="match status" value="1"/>
</dbReference>
<dbReference type="Gene3D" id="1.10.132.30">
    <property type="match status" value="1"/>
</dbReference>
<dbReference type="Gene3D" id="1.10.150.390">
    <property type="match status" value="1"/>
</dbReference>
<dbReference type="Gene3D" id="2.40.40.20">
    <property type="match status" value="1"/>
</dbReference>
<dbReference type="Gene3D" id="3.30.1360.140">
    <property type="match status" value="1"/>
</dbReference>
<dbReference type="Gene3D" id="6.10.250.2940">
    <property type="match status" value="1"/>
</dbReference>
<dbReference type="Gene3D" id="6.20.50.80">
    <property type="match status" value="1"/>
</dbReference>
<dbReference type="Gene3D" id="3.30.1490.180">
    <property type="entry name" value="RNA polymerase ii"/>
    <property type="match status" value="1"/>
</dbReference>
<dbReference type="Gene3D" id="4.10.860.120">
    <property type="entry name" value="RNA polymerase II, clamp domain"/>
    <property type="match status" value="2"/>
</dbReference>
<dbReference type="Gene3D" id="1.10.274.100">
    <property type="entry name" value="RNA polymerase Rpb1, domain 3"/>
    <property type="match status" value="1"/>
</dbReference>
<dbReference type="IDEAL" id="IID00126"/>
<dbReference type="InterPro" id="IPR045867">
    <property type="entry name" value="DNA-dir_RpoC_beta_prime"/>
</dbReference>
<dbReference type="InterPro" id="IPR000722">
    <property type="entry name" value="RNA_pol_asu"/>
</dbReference>
<dbReference type="InterPro" id="IPR000684">
    <property type="entry name" value="RNA_pol_II_repeat_euk"/>
</dbReference>
<dbReference type="InterPro" id="IPR006592">
    <property type="entry name" value="RNA_pol_N"/>
</dbReference>
<dbReference type="InterPro" id="IPR007080">
    <property type="entry name" value="RNA_pol_Rpb1_1"/>
</dbReference>
<dbReference type="InterPro" id="IPR007066">
    <property type="entry name" value="RNA_pol_Rpb1_3"/>
</dbReference>
<dbReference type="InterPro" id="IPR042102">
    <property type="entry name" value="RNA_pol_Rpb1_3_sf"/>
</dbReference>
<dbReference type="InterPro" id="IPR007083">
    <property type="entry name" value="RNA_pol_Rpb1_4"/>
</dbReference>
<dbReference type="InterPro" id="IPR007081">
    <property type="entry name" value="RNA_pol_Rpb1_5"/>
</dbReference>
<dbReference type="InterPro" id="IPR007075">
    <property type="entry name" value="RNA_pol_Rpb1_6"/>
</dbReference>
<dbReference type="InterPro" id="IPR007073">
    <property type="entry name" value="RNA_pol_Rpb1_7"/>
</dbReference>
<dbReference type="InterPro" id="IPR038593">
    <property type="entry name" value="RNA_pol_Rpb1_7_sf"/>
</dbReference>
<dbReference type="InterPro" id="IPR044893">
    <property type="entry name" value="RNA_pol_Rpb1_clamp_domain"/>
</dbReference>
<dbReference type="InterPro" id="IPR038120">
    <property type="entry name" value="Rpb1_funnel_sf"/>
</dbReference>
<dbReference type="NCBIfam" id="NF006336">
    <property type="entry name" value="PRK08566.1"/>
    <property type="match status" value="1"/>
</dbReference>
<dbReference type="PANTHER" id="PTHR19376">
    <property type="entry name" value="DNA-DIRECTED RNA POLYMERASE"/>
    <property type="match status" value="1"/>
</dbReference>
<dbReference type="PANTHER" id="PTHR19376:SF37">
    <property type="entry name" value="DNA-DIRECTED RNA POLYMERASE II SUBUNIT RPB1"/>
    <property type="match status" value="1"/>
</dbReference>
<dbReference type="Pfam" id="PF04997">
    <property type="entry name" value="RNA_pol_Rpb1_1"/>
    <property type="match status" value="1"/>
</dbReference>
<dbReference type="Pfam" id="PF00623">
    <property type="entry name" value="RNA_pol_Rpb1_2"/>
    <property type="match status" value="1"/>
</dbReference>
<dbReference type="Pfam" id="PF04983">
    <property type="entry name" value="RNA_pol_Rpb1_3"/>
    <property type="match status" value="1"/>
</dbReference>
<dbReference type="Pfam" id="PF05000">
    <property type="entry name" value="RNA_pol_Rpb1_4"/>
    <property type="match status" value="1"/>
</dbReference>
<dbReference type="Pfam" id="PF04998">
    <property type="entry name" value="RNA_pol_Rpb1_5"/>
    <property type="match status" value="1"/>
</dbReference>
<dbReference type="Pfam" id="PF04992">
    <property type="entry name" value="RNA_pol_Rpb1_6"/>
    <property type="match status" value="1"/>
</dbReference>
<dbReference type="Pfam" id="PF04990">
    <property type="entry name" value="RNA_pol_Rpb1_7"/>
    <property type="match status" value="1"/>
</dbReference>
<dbReference type="Pfam" id="PF05001">
    <property type="entry name" value="RNA_pol_Rpb1_R"/>
    <property type="match status" value="38"/>
</dbReference>
<dbReference type="PRINTS" id="PR01217">
    <property type="entry name" value="PRICHEXTENSN"/>
</dbReference>
<dbReference type="SMART" id="SM00663">
    <property type="entry name" value="RPOLA_N"/>
    <property type="match status" value="1"/>
</dbReference>
<dbReference type="SUPFAM" id="SSF64484">
    <property type="entry name" value="beta and beta-prime subunits of DNA dependent RNA-polymerase"/>
    <property type="match status" value="1"/>
</dbReference>
<dbReference type="PROSITE" id="PS00115">
    <property type="entry name" value="RNA_POL_II_REPEAT"/>
    <property type="match status" value="42"/>
</dbReference>
<gene>
    <name evidence="73" type="primary">POLR2A</name>
    <name type="synonym">POLR2</name>
</gene>
<comment type="function">
    <text evidence="1 3 38 39 41 46 48 50 64 66">Catalytic core component of RNA polymerase II (Pol II), a DNA-dependent RNA polymerase which synthesizes mRNA precursors and many functional non-coding RNAs using the four ribonucleoside triphosphates as substrates (By similarity) (PubMed:23748380, PubMed:27193682, PubMed:30190596, PubMed:9852112). Pol II-mediated transcription cycle proceeds through transcription initiation, transcription elongation and transcription termination stages. During transcription initiation, Pol II pre-initiation complex (PIC) is recruited to DNA promoters, with focused-type promoters containing either the initiator (Inr) element, or the TATA-box found in cell-type specific genes and dispersed-type promoters that often contain hypomethylated CpG islands usually found in housekeeping genes. Once the polymerase has escaped from the promoter it enters the elongation phase during which RNA is actively polymerized, based on complementarity with the template DNA strand. Transcription termination involves the release of the RNA transcript and polymerase from the DNA (By similarity) (PubMed:23748380, PubMed:27193682, PubMed:28108474, PubMed:30190596, PubMed:9852112). Forms Pol II active center together with the second largest subunit POLR2B/RPB2. Appends one nucleotide at a time to the 3' end of the nascent RNA, with POLR2A/RPB1 most likely contributing a Mg(2+)-coordinating DxDGD motif, and POLR2B/RPB2 participating in the coordination of a second Mg(2+) ion and providing lysine residues believed to facilitate Watson-Crick base pairing between the incoming nucleotide and template base. Typically, Mg(2+) ions direct a 5' nucleoside triphosphate to form a phosphodiester bond with the 3' hydroxyl of the preceding nucleotide of the nascent RNA, with the elimination of pyrophosphate. The reversible pyrophosphorolysis can occur at high pyrophosphate concentrations (By similarity) (PubMed:30190596, PubMed:8381534, PubMed:9852112). Can proofread the nascent RNA transcript by means of a 3' -&gt; 5' exonuclease activity. If a ribonucleotide is mis-incorporated, backtracks along the template DNA and cleaves the phosphodiester bond releasing the mis-incorporated 5'-ribonucleotide (By similarity) (PubMed:8381534). Through its unique C-terminal domain (CTD, 52 heptapeptide tandem repeats) serves as a platform for assembly of factors that regulate transcription initiation, elongation and termination. CTD phosphorylation on Ser-5 mediates Pol II promoter escape, whereas phosphorylation on Ser-2 is required for Pol II pause release during transcription elongation and further pre-mRNA processing. Additionally, the regulation of gene expression levels depends on the balance between methylation and acetylation levels of the CTD-lysines. Initiation or early elongation steps of transcription of growth-factor-induced immediate early genes are regulated by the acetylation status of the CTD. Methylation and dimethylation have a repressive effect on target genes expression. Cooperates with mRNA splicing machinery in co-transcriptional 5'-end capping and co-transcriptional splicing of pre-mRNA (By similarity) (PubMed:24207025, PubMed:26124092).</text>
</comment>
<comment type="function">
    <text evidence="36">RNA-dependent RNA polymerase that catalyzes the extension of a non-coding RNA (ncRNA) at the 3'-end using the four ribonucleoside triphosphates as substrates. An internal ncRNA sequence near the 3'-end serves as a template in a single-round Pol II-mediated RNA polymerization reaction. May decrease the stability of ncRNAs that repress Pol II-mediated gene transcription.</text>
</comment>
<comment type="function">
    <text evidence="21">(Microbial infection) Acts as an RNA-dependent RNA polymerase when associated with small delta antigen of Hepatitis delta virus, acting both as a replicase and transcriptase for the viral RNA circular genome.</text>
</comment>
<comment type="catalytic activity">
    <reaction evidence="38 46 50 66">
        <text>RNA(n) + a ribonucleoside 5'-triphosphate = RNA(n+1) + diphosphate</text>
        <dbReference type="Rhea" id="RHEA:21248"/>
        <dbReference type="Rhea" id="RHEA-COMP:14527"/>
        <dbReference type="Rhea" id="RHEA-COMP:17342"/>
        <dbReference type="ChEBI" id="CHEBI:33019"/>
        <dbReference type="ChEBI" id="CHEBI:61557"/>
        <dbReference type="ChEBI" id="CHEBI:140395"/>
        <dbReference type="EC" id="2.7.7.6"/>
    </reaction>
    <physiologicalReaction direction="left-to-right" evidence="38 39 46 50 66">
        <dbReference type="Rhea" id="RHEA:21249"/>
    </physiologicalReaction>
    <physiologicalReaction direction="right-to-left" evidence="72">
        <dbReference type="Rhea" id="RHEA:21250"/>
    </physiologicalReaction>
</comment>
<comment type="catalytic activity">
    <reaction evidence="36">
        <text>RNA(n) + a ribonucleoside 5'-triphosphate = RNA(n+1) + diphosphate</text>
        <dbReference type="Rhea" id="RHEA:21248"/>
        <dbReference type="Rhea" id="RHEA-COMP:14527"/>
        <dbReference type="Rhea" id="RHEA-COMP:17342"/>
        <dbReference type="ChEBI" id="CHEBI:33019"/>
        <dbReference type="ChEBI" id="CHEBI:61557"/>
        <dbReference type="ChEBI" id="CHEBI:140395"/>
        <dbReference type="EC" id="2.7.7.48"/>
    </reaction>
    <physiologicalReaction direction="left-to-right" evidence="36">
        <dbReference type="Rhea" id="RHEA:21249"/>
    </physiologicalReaction>
</comment>
<comment type="catalytic activity">
    <reaction evidence="64">
        <text>a 3'-end ribonucleotidyl-ribonucleotide-RNA + H2O = a 3'-end ribonucleotide-RNA + a ribonucleoside 5'-phosphate + H(+)</text>
        <dbReference type="Rhea" id="RHEA:77763"/>
        <dbReference type="Rhea" id="RHEA-COMP:17428"/>
        <dbReference type="Rhea" id="RHEA-COMP:18982"/>
        <dbReference type="ChEBI" id="CHEBI:15377"/>
        <dbReference type="ChEBI" id="CHEBI:15378"/>
        <dbReference type="ChEBI" id="CHEBI:58043"/>
        <dbReference type="ChEBI" id="CHEBI:74896"/>
        <dbReference type="ChEBI" id="CHEBI:197502"/>
    </reaction>
    <physiologicalReaction direction="left-to-right" evidence="64">
        <dbReference type="Rhea" id="RHEA:77764"/>
    </physiologicalReaction>
</comment>
<comment type="cofactor">
    <cofactor evidence="46">
        <name>Mg(2+)</name>
        <dbReference type="ChEBI" id="CHEBI:18420"/>
    </cofactor>
    <text evidence="46">Two Mg(2+) ions are coordinated by both the catalytic residues and the nucleic acid substrate to enhance substrate recognition and catalytic efficiency.</text>
</comment>
<comment type="activity regulation">
    <text evidence="64">Pol II enzymatic activities are inhibited by alpha-amanitin. 3'-&gt;5' exonuclease activity is stimulated by TCEA1/TFIIS, whereas pyrophosphorolysis is enhanced by TFIIF.</text>
</comment>
<comment type="subunit">
    <text evidence="3 6 7 8 9 10 11 12 13 14 15 16 17 18 19 20 22 23 24 28 31 35 37 38 40 41 45 46 47 50 51 53 65 66 69">Component of the RNA polymerase II (Pol II) core complex consisting of 12 subunits: a ten-subunit catalytic core composed of POLR2A/RPB1, POLR2B/RPB2, POLR2C/RPB3, POLR2I/RPB9, POLR2J/RPB11, POLR2E/RPABC1, POLR2F/RPABC2, POLR2H/RPABC3, POLR2K/RPABC4 and POLR2L/RPABC5 and a mobile stalk composed of two subunits POLR2D/RPB4 and POLR2G/RPB7, protruding from the core and functioning primarily in transcription initiation. Part of Pol II(G) complex, in which Pol II core associates with an additional subunit POLR2M; unlike conventional Pol II, Pol II(G) functions as a transcriptional repressor. Part of TBP-based Pol II pre-initiation complex (PIC), in which Pol II core assembles with general transcription factors and other specific initiation factors including GTF2E1, GTF2E2, GTF2F1, GTF2F2, TCEA1, ERCC2, ERCC3, GTF2H2, GTF2H3, GTF2H4, GTF2H5, GTF2A1, GTF2A2, GTF2B and TBP; this large multi-subunit PIC complex mediates DNA unwinding and targets Pol II core to the transcription start site where the first phosphodiester bond forms (PubMed:27193682, PubMed:30190596, PubMed:9852112). Component of a complex which is at least composed of HTATSF1/Tat-SF1, the P-TEFb complex components CDK9 and CCNT1, Pol II, SUPT5H, and NCL/nucleolin (PubMed:10393184, PubMed:10454543, PubMed:17234882). The large PER complex involved in the repression of transcriptional termination is composed of at least PER2, CDK9, DDX5, DHX9, NCBP1 and POLR2A (active) (PubMed:28076779). Interacts (via the C-terminal domain (CTD)) with U2AF2; recruits PRPF19 and the Prp19 complex to the pre-mRNA and may couple transcription to pre-mRNA splicing (PubMed:21536736). Interacts (via the C-terminal domain (CTD)) with SMN1/SMN2; recruits SMN1/SMN2 to RNA Pol II elongation complexes (PubMed:26700805). Interacts via the phosphorylated C-terminal domain with WDR82 and with SETD1A and SETD1B only in the presence of WDR82 (PubMed:17998332). When phosphorylated at 'Ser-5', interacts with MEN1; the unphosphorylated form, or phosphorylated at 'Ser-2' does not interact (PubMed:14992727). When phosphorylated at 'Ser-5', interacts with ZMYND8; the form phosphorylated at 'Ser-2' does not interact (PubMed:26700805). When phosphorylated at 'Ser-2', interacts with SUPT6H (via SH2 domain) (PubMed:17234882). Interacts with RECQL5 and TCEA1; binding of RECQL5 prevents TCEA1 binding (PubMed:20231364, PubMed:23748380). The phosphorylated C-terminal domain interacts with FNBP3 (PubMed:12381297). The phosphorylated C-terminal domain interacts with SYNCRIP (PubMed:12376575). Interacts with ATF7IP (PubMed:19106100). Interacts with DDX5 (PubMed:12527917). Interacts with WWP2 (By similarity). Interacts with SETX (PubMed:23149945, PubMed:26700805). Interacts (phosphorylated) with PIH1D1 (PubMed:24656813). Interacts (via the C-terminal domain (CTD)) with TDRD3 (PubMed:26700805). Interacts with PRMT5 (PubMed:26700805). Interacts with XRN2 (PubMed:26700805). Interacts with SAFB/SAFB1 (PubMed:9671816). Interacts with CCNL1 (Probable). Interacts with CCNL2 (PubMed:14684736). Interacts with MYO1C (By similarity). Interacts with PAF1 (PubMed:16491129). Interacts with SFRS19 (PubMed:15992770). Interacts (via C-terminus) with CMTR1 (PubMed:18533109). Interacts (via C-terminus) with CTDSP1 (PubMed:17157258). Interacts (via C-terminus) with SCAF8 (PubMed:18550522). Interacts (via the C-terminal domain (CTD)) with CCNT2 (PubMed:15563843). Interacts with FUS (PubMed:26124092). Interacts with MCM3AP isoform GANP (PubMed:23652018). Interacts with kinase SRPK2; the interaction occurs during the co-transcriptional formation of inappropriate R-loops (PubMed:28076779). Interacts with SETD2 (PubMed:16118227, PubMed:16314571). Interacts with UVSSA (PubMed:32142649). Interacts with ERCC6 (PubMed:32142649). Interacts with the TFIIH complex (PubMed:32142649). Interacts (via the C-terminal domain) with IVNS1ABP (via Kelch repeats) (PubMed:30538201).</text>
</comment>
<comment type="subunit">
    <text evidence="34">(Microbial infection) Interacts with herpes simplex virus 1 protein ICP22; this interaction causes loss of CTD 'Ser-2' phosphorylation from Pol II engaged in transcription (PubMed:23029222).</text>
</comment>
<comment type="interaction">
    <interactant intactId="EBI-295301">
        <id>P24928</id>
    </interactant>
    <interactant intactId="EBI-6425205">
        <id>Q9NWX5</id>
        <label>ASB6</label>
    </interactant>
    <organismsDiffer>false</organismsDiffer>
    <experiments>6</experiments>
</comment>
<comment type="interaction">
    <interactant intactId="EBI-295301">
        <id>P24928</id>
    </interactant>
    <interactant intactId="EBI-930143">
        <id>Q6P1J9</id>
        <label>CDC73</label>
    </interactant>
    <organismsDiffer>false</organismsDiffer>
    <experiments>6</experiments>
</comment>
<comment type="interaction">
    <interactant intactId="EBI-295301">
        <id>P24928</id>
    </interactant>
    <interactant intactId="EBI-351962">
        <id>P17844</id>
        <label>DDX5</label>
    </interactant>
    <organismsDiffer>false</organismsDiffer>
    <experiments>3</experiments>
</comment>
<comment type="interaction">
    <interactant intactId="EBI-295301">
        <id>P24928</id>
    </interactant>
    <interactant intactId="EBI-15569571">
        <id>Q9UPY3-1</id>
        <label>DICER1</label>
    </interactant>
    <organismsDiffer>false</organismsDiffer>
    <experiments>3</experiments>
</comment>
<comment type="interaction">
    <interactant intactId="EBI-295301">
        <id>P24928</id>
    </interactant>
    <interactant intactId="EBI-25830642">
        <id>Q8N108-16</id>
        <label>MIER1</label>
    </interactant>
    <organismsDiffer>false</organismsDiffer>
    <experiments>3</experiments>
</comment>
<comment type="interaction">
    <interactant intactId="EBI-295301">
        <id>P24928</id>
    </interactant>
    <interactant intactId="EBI-2607770">
        <id>Q8N7H5</id>
        <label>PAF1</label>
    </interactant>
    <organismsDiffer>false</organismsDiffer>
    <experiments>5</experiments>
</comment>
<comment type="interaction">
    <interactant intactId="EBI-295301">
        <id>P24928</id>
    </interactant>
    <interactant intactId="EBI-351098">
        <id>O14744</id>
        <label>PRMT5</label>
    </interactant>
    <organismsDiffer>false</organismsDiffer>
    <experiments>6</experiments>
</comment>
<comment type="interaction">
    <interactant intactId="EBI-295301">
        <id>P24928</id>
    </interactant>
    <interactant intactId="EBI-15710057">
        <id>O94762-1</id>
        <label>RECQL5</label>
    </interactant>
    <organismsDiffer>false</organismsDiffer>
    <experiments>8</experiments>
</comment>
<comment type="interaction">
    <interactant intactId="EBI-295301">
        <id>P24928</id>
    </interactant>
    <interactant intactId="EBI-1053506">
        <id>Q96P16</id>
        <label>RPRD1A</label>
    </interactant>
    <organismsDiffer>false</organismsDiffer>
    <experiments>3</experiments>
</comment>
<comment type="interaction">
    <interactant intactId="EBI-295301">
        <id>P24928</id>
    </interactant>
    <interactant intactId="EBI-747925">
        <id>Q9NQG5</id>
        <label>RPRD1B</label>
    </interactant>
    <organismsDiffer>false</organismsDiffer>
    <experiments>12</experiments>
</comment>
<comment type="interaction">
    <interactant intactId="EBI-295301">
        <id>P24928</id>
    </interactant>
    <interactant intactId="EBI-1220123">
        <id>Q7Z333</id>
        <label>SETX</label>
    </interactant>
    <organismsDiffer>false</organismsDiffer>
    <experiments>7</experiments>
</comment>
<comment type="interaction">
    <interactant intactId="EBI-295301">
        <id>P24928</id>
    </interactant>
    <interactant intactId="EBI-395421">
        <id>Q16637</id>
        <label>SMN2</label>
    </interactant>
    <organismsDiffer>false</organismsDiffer>
    <experiments>12</experiments>
</comment>
<comment type="interaction">
    <interactant intactId="EBI-295301">
        <id>P24928</id>
    </interactant>
    <interactant intactId="EBI-747719">
        <id>Q96H20</id>
        <label>SNF8</label>
    </interactant>
    <organismsDiffer>false</organismsDiffer>
    <experiments>2</experiments>
</comment>
<comment type="interaction">
    <interactant intactId="EBI-295301">
        <id>P24928</id>
    </interactant>
    <interactant intactId="EBI-710464">
        <id>O00267</id>
        <label>SUPT5H</label>
    </interactant>
    <organismsDiffer>false</organismsDiffer>
    <experiments>6</experiments>
</comment>
<comment type="interaction">
    <interactant intactId="EBI-295301">
        <id>P24928</id>
    </interactant>
    <interactant intactId="EBI-2608271">
        <id>P23193</id>
        <label>TCEA1</label>
    </interactant>
    <organismsDiffer>false</organismsDiffer>
    <experiments>5</experiments>
</comment>
<comment type="interaction">
    <interactant intactId="EBI-295301">
        <id>P24928</id>
    </interactant>
    <interactant intactId="EBI-3938232">
        <id>Q9H7E2</id>
        <label>TDRD3</label>
    </interactant>
    <organismsDiffer>false</organismsDiffer>
    <experiments>6</experiments>
</comment>
<comment type="interaction">
    <interactant intactId="EBI-295301">
        <id>P24928</id>
    </interactant>
    <interactant intactId="EBI-17438286">
        <id>Q8WTV1</id>
        <label>THAP3</label>
    </interactant>
    <organismsDiffer>false</organismsDiffer>
    <experiments>3</experiments>
</comment>
<comment type="interaction">
    <interactant intactId="EBI-295301">
        <id>P24928</id>
    </interactant>
    <interactant intactId="EBI-295232">
        <id>Q9HCS7</id>
        <label>XAB2</label>
    </interactant>
    <organismsDiffer>false</organismsDiffer>
    <experiments>2</experiments>
</comment>
<comment type="interaction">
    <interactant intactId="EBI-295301">
        <id>P24928</id>
    </interactant>
    <interactant intactId="EBI-14033488">
        <id>Q98140</id>
        <label>ORF24</label>
    </interactant>
    <organismsDiffer>true</organismsDiffer>
    <experiments>2</experiments>
</comment>
<comment type="interaction">
    <interactant intactId="EBI-295301">
        <id>P24928</id>
    </interactant>
    <interactant intactId="EBI-11712334">
        <id>L8B1Q7</id>
        <label>ORF6</label>
    </interactant>
    <organismsDiffer>true</organismsDiffer>
    <experiments>3</experiments>
</comment>
<comment type="interaction">
    <interactant intactId="EBI-295301">
        <id>P24928</id>
    </interactant>
    <interactant intactId="EBI-11514477">
        <id>Q67020</id>
        <label>PA</label>
    </interactant>
    <organismsDiffer>true</organismsDiffer>
    <experiments>2</experiments>
</comment>
<comment type="subcellular location">
    <subcellularLocation>
        <location evidence="43 47 66">Nucleus</location>
    </subcellularLocation>
    <subcellularLocation>
        <location evidence="43">Cytoplasm</location>
    </subcellularLocation>
    <subcellularLocation>
        <location evidence="47">Chromosome</location>
    </subcellularLocation>
    <text evidence="43 47">Hypophosphorylated form is mainly found in the cytoplasm, while the hyperphosphorylated and active form is nuclear (PubMed:26566685). Co-localizes with kinase SRPK2 and helicase DDX23 at chromatin loci where unscheduled R-loops form (PubMed:28076779).</text>
</comment>
<comment type="alternative products">
    <event type="alternative splicing"/>
    <isoform>
        <id>P24928-1</id>
        <name>1</name>
        <sequence type="displayed"/>
    </isoform>
    <isoform>
        <id>P24928-2</id>
        <name>2</name>
        <sequence type="described" ref="VSP_056184 VSP_056185"/>
    </isoform>
</comment>
<comment type="domain">
    <text evidence="68">The C-terminal domain (CTD) serves as a platform for assembly of factors that regulate transcription initiation, elongation, termination and mRNA processing.</text>
</comment>
<comment type="domain">
    <text evidence="1">The trigger loop allows entry of NTPs into the active site, switching between an open and closed state with each NTP addition cycle.</text>
</comment>
<comment type="domain">
    <text evidence="1">The bridging helix crosses the cleft near the catalytic site and is thought to promote polymerase translocation by acting as a ratchet that moves the DNA-RNA hybrid through the active site.</text>
</comment>
<comment type="PTM">
    <text evidence="18 19 25 26 27 29 32 42 43 47 49 54 55 56 57 61">The tandem heptapeptide repeats in the C-terminal domain (CTD) can be highly phosphorylated (PubMed:17234882, PubMed:19450536, PubMed:19667075, PubMed:19136461, PubMed:26566685, PubMed:28076779, PubMed:32142654, PubMed:33243860, PubMed:34004147). The phosphorylation activates Pol II (PubMed:33243860). Phosphorylation occurs mainly at residues 'Ser-2' and 'Ser-5' of the heptapeptide repeat and is mediated, at least, by CDK7 and CDK9 (PubMed:19450536, PubMed:19667075, PubMed:19136461, PubMed:21127351). POLR2A associated with DNA is specifically phosphorylated at 'Ser-5' of the CTD by CDK7, promoting transcription initiation by triggering dissociation from DNA (PubMed:19136461, PubMed:26257281, PubMed:28768201). Phosphorylated at 'Ser-2', Ser-5' and 'Ser-7' of the CTD by CDK9 (P-TEFb complex), promoting transcription elongation (PubMed:19667075, PubMed:21127351). Phosphorylation also takes place at 'Ser-7' of the heptapeptide repeat, which is required for efficient transcription of snRNA genes and processing of the transcripts (PubMed:22137580). The phosphorylation state is believed to result from the balanced action of site-specific CTD kinases and phosphatases, and a 'CTD code' that specifies the position of Pol II within the transcription cycle has been proposed (PubMed:19450536, PubMed:19667075, PubMed:19136461, PubMed:33243860, PubMed:34004147). Dephosphorylated by the INTAC complex when transcripts are unfavorably configured for transcriptional elongation, leading to premature transcription termination: dephosphorylation is mediated by the PPP2CA component of the INTAC complex (PubMed:33243860, PubMed:34004147, PubMed:37080207). In response to replication stress, dephosphorylated at 'Ser-5' of the CTD by the PNUTS-PP1 complex, promoting RNA polymerase II degradation (PubMed:33264625). Dephosphorylated by the protein phosphatase CTDSP1 (PubMed:17157258). Dephosphorylated at 'Ser-2' following UV irradiation.</text>
</comment>
<comment type="PTM">
    <text evidence="39 43 44">Among tandem heptapeptide repeats of the C-terminal domain (CTD) some do not match the Y-S-P-T-S-P-S consensus, the seventh serine residue 'Ser-7' being replaced by a lysine. 'Lys-7' in these non-consensus heptapeptide repeats can be alternatively acetylated, methylated and dimethylated. EP300 is one of the enzyme able to acetylate 'Lys-7'. Acetylation at 'Lys-7' of non-consensus heptapeptide repeats is associated with 'Ser-2' phosphorylation and active transcription. Regulates initiation or early elongation steps of transcription specially for inducible genes.</text>
</comment>
<comment type="PTM">
    <text evidence="3 43 44 45">Methylated at Arg-1810 prior to transcription initiation when the CTD is hypophosphorylated, phosphorylation at Ser-1805 and Ser-1808 preventing this methylation. Symmetrically or asymmetrically dimethylated at Arg-1810 by PRMT5 and CARM1 respectively. Symmetric or asymmetric dimethylation modulates interactions with CTD-binding proteins like SMN1/SMN2 and TDRD3. SMN1/SMN2 interacts preferentially with the symmetrically dimethylated form while TDRD3 interacts with the asymmetric form. Through the recruitment of SMN1/SMN2, symmetric dimethylation is required for resolving RNA-DNA hybrids created by RNA polymerase II, that form R-loop in transcription terminal regions, an important step in proper transcription termination. CTD dimethylation may also facilitate the expression of select RNAs. Among tandem heptapeptide repeats of the C-terminal domain (CTD) some do not match the Y-S-P-T-S-P-S consensus, the seventh serine residue 'Ser-7' being replaced by a lysine. 'Lys-7' in these non-consensus heptapeptide repeats can be alternatively acetylated, methylated, dimethylated and trimethylated. Methylation occurs in the earliest transcription stages and precedes or is concomitant to 'Ser-5' and 'Ser-7' phosphorylation. Dimethylation and trimehtylation at 'Lys-7' of non-consensus heptapeptide repeats are exclusively associated with phosphorylated CTD.</text>
</comment>
<comment type="PTM">
    <text evidence="3 33 53 54 58 59 60 62 63">Following transcription stress, the elongating form of RNA polymerase II (RNA pol IIo) is ubiquitinated by the DCX(ERCC8) complex (also named CSA complex) on Lys-1268 at DNA damage sites without leading to degradation: ubiquitination promotes RNA pol IIo backtracking to allow access by the transcription-coupled nucleotide excision repair (TC-NER) machinery (PubMed:22466610, PubMed:32142649, PubMed:32142654, PubMed:34526721, PubMed:35633597). At stalled RNA pol II where TC-NER has failed, RBX1-mediated polybiquitination at Lys-1268 may lead to proteasome-mediated degradation in a UBAP2- and UBAP2L-dependent manner; presumably to halt global transcription and enable 'last resort' DNA repair pathways (PubMed:35633597). Ubiquitinated by the BCR(ARMC5) complex when transcripts are unfavorably configured for transcriptional elongation: the BCR(ARMC5) complex specifically catalyzes ubiquitination of POLR2A phosphorylated at 'Ser-5' of the C-terminal domain (CTD), leading to POLR2A degradation (PubMed:35687106, PubMed:39504960, PubMed:39667934). Ubiquitination by the BCR(ARMC5) complex takes place at residues distinct from Lys-1268 (PubMed:39667934). Ubiquitinated by WWP2 leading to proteasomal degradation (By similarity).</text>
</comment>
<comment type="disease" evidence="52">
    <disease id="DI-05667">
        <name>Neurodevelopmental disorder with hypotonia and variable intellectual and behavioral abnormalities</name>
        <acronym>NEDHIB</acronym>
        <description>An autosomal dominant neurodevelopmental disorder characterized by profound infantile-onset hypotonia, developmental delay with poor speech, delayed walking, and impaired intellectual development. Additional variable features include feeding difficulties, dysmorphic features, and visual defects.</description>
        <dbReference type="MIM" id="618603"/>
    </disease>
    <text>The disease is caused by variants affecting the gene represented in this entry.</text>
</comment>
<comment type="similarity">
    <text evidence="69">Belongs to the RNA polymerase beta' chain family.</text>
</comment>
<accession>P24928</accession>
<accession>A6NN93</accession>
<accession>B9EH88</accession>
<accession>Q6NX41</accession>
<evidence type="ECO:0000250" key="1">
    <source>
        <dbReference type="UniProtKB" id="G3MZY8"/>
    </source>
</evidence>
<evidence type="ECO:0000250" key="2">
    <source>
        <dbReference type="UniProtKB" id="P04050"/>
    </source>
</evidence>
<evidence type="ECO:0000250" key="3">
    <source>
        <dbReference type="UniProtKB" id="P08775"/>
    </source>
</evidence>
<evidence type="ECO:0000255" key="4"/>
<evidence type="ECO:0000256" key="5">
    <source>
        <dbReference type="SAM" id="MobiDB-lite"/>
    </source>
</evidence>
<evidence type="ECO:0000269" key="6">
    <source>
    </source>
</evidence>
<evidence type="ECO:0000269" key="7">
    <source>
    </source>
</evidence>
<evidence type="ECO:0000269" key="8">
    <source>
    </source>
</evidence>
<evidence type="ECO:0000269" key="9">
    <source>
    </source>
</evidence>
<evidence type="ECO:0000269" key="10">
    <source>
    </source>
</evidence>
<evidence type="ECO:0000269" key="11">
    <source>
    </source>
</evidence>
<evidence type="ECO:0000269" key="12">
    <source>
    </source>
</evidence>
<evidence type="ECO:0000269" key="13">
    <source>
    </source>
</evidence>
<evidence type="ECO:0000269" key="14">
    <source>
    </source>
</evidence>
<evidence type="ECO:0000269" key="15">
    <source>
    </source>
</evidence>
<evidence type="ECO:0000269" key="16">
    <source>
    </source>
</evidence>
<evidence type="ECO:0000269" key="17">
    <source>
    </source>
</evidence>
<evidence type="ECO:0000269" key="18">
    <source>
    </source>
</evidence>
<evidence type="ECO:0000269" key="19">
    <source>
    </source>
</evidence>
<evidence type="ECO:0000269" key="20">
    <source>
    </source>
</evidence>
<evidence type="ECO:0000269" key="21">
    <source>
    </source>
</evidence>
<evidence type="ECO:0000269" key="22">
    <source>
    </source>
</evidence>
<evidence type="ECO:0000269" key="23">
    <source>
    </source>
</evidence>
<evidence type="ECO:0000269" key="24">
    <source>
    </source>
</evidence>
<evidence type="ECO:0000269" key="25">
    <source>
    </source>
</evidence>
<evidence type="ECO:0000269" key="26">
    <source>
    </source>
</evidence>
<evidence type="ECO:0000269" key="27">
    <source>
    </source>
</evidence>
<evidence type="ECO:0000269" key="28">
    <source>
    </source>
</evidence>
<evidence type="ECO:0000269" key="29">
    <source>
    </source>
</evidence>
<evidence type="ECO:0000269" key="30">
    <source>
    </source>
</evidence>
<evidence type="ECO:0000269" key="31">
    <source>
    </source>
</evidence>
<evidence type="ECO:0000269" key="32">
    <source>
    </source>
</evidence>
<evidence type="ECO:0000269" key="33">
    <source>
    </source>
</evidence>
<evidence type="ECO:0000269" key="34">
    <source>
    </source>
</evidence>
<evidence type="ECO:0000269" key="35">
    <source>
    </source>
</evidence>
<evidence type="ECO:0000269" key="36">
    <source>
    </source>
</evidence>
<evidence type="ECO:0000269" key="37">
    <source>
    </source>
</evidence>
<evidence type="ECO:0000269" key="38">
    <source>
    </source>
</evidence>
<evidence type="ECO:0000269" key="39">
    <source>
    </source>
</evidence>
<evidence type="ECO:0000269" key="40">
    <source>
    </source>
</evidence>
<evidence type="ECO:0000269" key="41">
    <source>
    </source>
</evidence>
<evidence type="ECO:0000269" key="42">
    <source>
    </source>
</evidence>
<evidence type="ECO:0000269" key="43">
    <source>
    </source>
</evidence>
<evidence type="ECO:0000269" key="44">
    <source>
    </source>
</evidence>
<evidence type="ECO:0000269" key="45">
    <source>
    </source>
</evidence>
<evidence type="ECO:0000269" key="46">
    <source>
    </source>
</evidence>
<evidence type="ECO:0000269" key="47">
    <source>
    </source>
</evidence>
<evidence type="ECO:0000269" key="48">
    <source>
    </source>
</evidence>
<evidence type="ECO:0000269" key="49">
    <source>
    </source>
</evidence>
<evidence type="ECO:0000269" key="50">
    <source>
    </source>
</evidence>
<evidence type="ECO:0000269" key="51">
    <source>
    </source>
</evidence>
<evidence type="ECO:0000269" key="52">
    <source>
    </source>
</evidence>
<evidence type="ECO:0000269" key="53">
    <source>
    </source>
</evidence>
<evidence type="ECO:0000269" key="54">
    <source>
    </source>
</evidence>
<evidence type="ECO:0000269" key="55">
    <source>
    </source>
</evidence>
<evidence type="ECO:0000269" key="56">
    <source>
    </source>
</evidence>
<evidence type="ECO:0000269" key="57">
    <source>
    </source>
</evidence>
<evidence type="ECO:0000269" key="58">
    <source>
    </source>
</evidence>
<evidence type="ECO:0000269" key="59">
    <source>
    </source>
</evidence>
<evidence type="ECO:0000269" key="60">
    <source>
    </source>
</evidence>
<evidence type="ECO:0000269" key="61">
    <source>
    </source>
</evidence>
<evidence type="ECO:0000269" key="62">
    <source>
    </source>
</evidence>
<evidence type="ECO:0000269" key="63">
    <source>
    </source>
</evidence>
<evidence type="ECO:0000269" key="64">
    <source>
    </source>
</evidence>
<evidence type="ECO:0000269" key="65">
    <source>
    </source>
</evidence>
<evidence type="ECO:0000269" key="66">
    <source>
    </source>
</evidence>
<evidence type="ECO:0000303" key="67">
    <source>
    </source>
</evidence>
<evidence type="ECO:0000303" key="68">
    <source>
    </source>
</evidence>
<evidence type="ECO:0000305" key="69"/>
<evidence type="ECO:0000305" key="70">
    <source>
    </source>
</evidence>
<evidence type="ECO:0000305" key="71">
    <source>
    </source>
</evidence>
<evidence type="ECO:0000305" key="72">
    <source>
    </source>
</evidence>
<evidence type="ECO:0000312" key="73">
    <source>
        <dbReference type="HGNC" id="HGNC:9187"/>
    </source>
</evidence>
<evidence type="ECO:0007744" key="74">
    <source>
        <dbReference type="PDB" id="5IY6"/>
    </source>
</evidence>
<evidence type="ECO:0007744" key="75">
    <source>
        <dbReference type="PDB" id="7YCX"/>
    </source>
</evidence>
<evidence type="ECO:0007744" key="76">
    <source>
    </source>
</evidence>
<evidence type="ECO:0007744" key="77">
    <source>
    </source>
</evidence>
<evidence type="ECO:0007744" key="78">
    <source>
    </source>
</evidence>
<evidence type="ECO:0007744" key="79">
    <source>
    </source>
</evidence>
<evidence type="ECO:0007744" key="80">
    <source>
    </source>
</evidence>
<evidence type="ECO:0007744" key="81">
    <source>
    </source>
</evidence>
<evidence type="ECO:0007744" key="82">
    <source>
    </source>
</evidence>
<evidence type="ECO:0007829" key="83">
    <source>
        <dbReference type="PDB" id="5M3H"/>
    </source>
</evidence>
<evidence type="ECO:0007829" key="84">
    <source>
        <dbReference type="PDB" id="7Z42"/>
    </source>
</evidence>
<evidence type="ECO:0007829" key="85">
    <source>
        <dbReference type="PDB" id="8R3L"/>
    </source>
</evidence>
<evidence type="ECO:0007829" key="86">
    <source>
        <dbReference type="PDB" id="8R60"/>
    </source>
</evidence>
<proteinExistence type="evidence at protein level"/>
<keyword id="KW-0002">3D-structure</keyword>
<keyword id="KW-0007">Acetylation</keyword>
<keyword id="KW-0025">Alternative splicing</keyword>
<keyword id="KW-0158">Chromosome</keyword>
<keyword id="KW-0963">Cytoplasm</keyword>
<keyword id="KW-0225">Disease variant</keyword>
<keyword id="KW-0238">DNA-binding</keyword>
<keyword id="KW-0240">DNA-directed RNA polymerase</keyword>
<keyword id="KW-0945">Host-virus interaction</keyword>
<keyword id="KW-0378">Hydrolase</keyword>
<keyword id="KW-0991">Intellectual disability</keyword>
<keyword id="KW-1017">Isopeptide bond</keyword>
<keyword id="KW-0460">Magnesium</keyword>
<keyword id="KW-0479">Metal-binding</keyword>
<keyword id="KW-0488">Methylation</keyword>
<keyword id="KW-0548">Nucleotidyltransferase</keyword>
<keyword id="KW-0539">Nucleus</keyword>
<keyword id="KW-0597">Phosphoprotein</keyword>
<keyword id="KW-1267">Proteomics identification</keyword>
<keyword id="KW-1185">Reference proteome</keyword>
<keyword id="KW-0677">Repeat</keyword>
<keyword id="KW-0696">RNA-directed RNA polymerase</keyword>
<keyword id="KW-0804">Transcription</keyword>
<keyword id="KW-0808">Transferase</keyword>
<keyword id="KW-0832">Ubl conjugation</keyword>
<keyword id="KW-0862">Zinc</keyword>
<sequence>MHGGGPPSGDSACPLRTIKRVQFGVLSPDELKRMSVTEGGIKYPETTEGGRPKLGGLMDPRQGVIERTGRCQTCAGNMTECPGHFGHIELAKPVFHVGFLVKTMKVLRCVCFFCSKLLVDSNNPKIKDILAKSKGQPKKRLTHVYDLCKGKNICEGGEEMDNKFGVEQPEGDEDLTKEKGHGGCGRYQPRIRRSGLELYAEWKHVNEDSQEKKILLSPERVHEIFKRISDEECFVLGMEPRYARPEWMIVTVLPVPPLSVRPAVVMQGSARNQDDLTHKLADIVKINNQLRRNEQNGAAAHVIAEDVKLLQFHVATMVDNELPGLPRAMQKSGRPLKSLKQRLKGKEGRVRGNLMGKRVDFSARTVITPDPNLSIDQVGVPRSIAANMTFAEIVTPFNIDRLQELVRRGNSQYPGAKYIIRDNGDRIDLRFHPKPSDLHLQTGYKVERHMCDGDIVIFNRQPTLHKMSMMGHRVRILPWSTFRLNLSVTTPYNADFDGDEMNLHLPQSLETRAEIQELAMVPRMIVTPQSNRPVMGIVQDTLTAVRKFTKRDVFLERGEVMNLLMFLSTWDGKVPQPAILKPRPLWTGKQIFSLIIPGHINCIRTHSTHPDDEDSGPYKHISPGDTKVVVENGELIMGILCKKSLGTSAGSLVHISYLEMGHDITRLFYSNIQTVINNWLLIEGHTIGIGDSIADSKTYQDIQNTIKKAKQDVIEVIEKAHNNELEPTPGNTLRQTFENQVNRILNDARDKTGSSAQKSLSEYNNFKSMVVSGAKGSKINISQVIAVVGQQNVEGKRIPFGFKHRTLPHFIKDDYGPESRGFVENSYLAGLTPTEFFFHAMGGREGLIDTAVKTAETGYIQRRLIKSMESVMVKYDATVRNSINQVVQLRYGEDGLAGESVEFQNLATLKPSNKAFEKKFRFDYTNERALRRTLQEDLVKDVLSNAHIQNELEREFERMREDREVLRVIFPTGDSKVVLPCNLLRMIWNAQKIFHINPRLPSDLHPIKVVEGVKELSKKLVIVNGDDPLSRQAQENATLLFNIHLRSTLCSRRMAEEFRLSGEAFDWLLGEIESKFNQAIAHPGEMVGALAAQSLGEPATQMTLNTFHYAGVSAKNVTLGVPRLKELINISKKPKTPSLTVFLLGQSARDAERAKDILCRLEHTTLRKVTANTAIYYDPNPQSTVVAEDQEWVNVYYEMPDFDVARISPWLLRVELDRKHMTDRKLTMEQIAEKINAGFGDDLNCIFNDDNAEKLVLRIRIMNSDENKMQEEEEVVDKMDDDVFLRCIESNMLTDMTLQGIEQISKVYMHLPQTDNKKKIIITEDGEFKALQEWILETDGVSLMRVLSEKDVDPVRTTSNDIVEIFTVLGIEAVRKALERELYHVISFDGSYVNYRHLALLCDTMTCRGHLMAITRHGVNRQDTGPLMKCSFEETVDVLMEAAAHGESDPMKGVSENIMLGQLAPAGTGCFDLLLDAEKCKYGMEIPTNIPGLGAAGPTGMFFGSAPSPMGGISPAMTPWNQGATPAYGAWSPSVGSGMTPGAAGFSPSAASDASGFSPGYSPAWSPTPGSPGSPGPSSPYIPSPGGAMSPSYSPTSPAYEPRSPGGYTPQSPSYSPTSPSYSPTSPSYSPTSPNYSPTSPSYSPTSPSYSPTSPSYSPTSPSYSPTSPSYSPTSPSYSPTSPSYSPTSPSYSPTSPSYSPTSPSYSPTSPSYSPTSPSYSPTSPSYSPTSPSYSPTSPSYSPTSPNYSPTSPNYTPTSPSYSPTSPSYSPTSPNYTPTSPNYSPTSPSYSPTSPSYSPTSPSYSPSSPRYTPQSPTYTPSSPSYSPSSPSYSPASPKYTPTSPSYSPSSPEYTPTSPKYSPTSPKYSPTSPKYSPTSPTYSPTTPKYSPTSPTYSPTSPVYTPTSPKYSPTSPTYSPTSPKYSPTSPTYSPTSPKGSTYSPTSPGYSPTSPTYSLTSPAISPDDSDEEN</sequence>
<reference key="1">
    <citation type="journal article" date="1992" name="Nucleic Acids Res.">
        <title>Complete sequence of the human RNA polymerase II largest subunit.</title>
        <authorList>
            <person name="Wintzerith M."/>
            <person name="Acker J."/>
            <person name="Vicaire S."/>
            <person name="Vigneron M."/>
            <person name="Kedinger C."/>
        </authorList>
    </citation>
    <scope>NUCLEOTIDE SEQUENCE [MRNA] (ISOFORM 1)</scope>
</reference>
<reference key="2">
    <citation type="journal article" date="1995" name="Gene">
        <title>The human gene encoding the largest subunit of RNA polymerase II.</title>
        <authorList>
            <person name="Mita K."/>
            <person name="Tsuji H."/>
            <person name="Morimyo M."/>
            <person name="Takahashi E."/>
            <person name="Nenoi M."/>
            <person name="Ichimura S."/>
            <person name="Yamauchi M."/>
            <person name="Hongo E."/>
            <person name="Hayashi A."/>
        </authorList>
    </citation>
    <scope>NUCLEOTIDE SEQUENCE [GENOMIC DNA]</scope>
</reference>
<reference key="3">
    <citation type="journal article" date="2006" name="Nature">
        <title>DNA sequence of human chromosome 17 and analysis of rearrangement in the human lineage.</title>
        <authorList>
            <person name="Zody M.C."/>
            <person name="Garber M."/>
            <person name="Adams D.J."/>
            <person name="Sharpe T."/>
            <person name="Harrow J."/>
            <person name="Lupski J.R."/>
            <person name="Nicholson C."/>
            <person name="Searle S.M."/>
            <person name="Wilming L."/>
            <person name="Young S.K."/>
            <person name="Abouelleil A."/>
            <person name="Allen N.R."/>
            <person name="Bi W."/>
            <person name="Bloom T."/>
            <person name="Borowsky M.L."/>
            <person name="Bugalter B.E."/>
            <person name="Butler J."/>
            <person name="Chang J.L."/>
            <person name="Chen C.-K."/>
            <person name="Cook A."/>
            <person name="Corum B."/>
            <person name="Cuomo C.A."/>
            <person name="de Jong P.J."/>
            <person name="DeCaprio D."/>
            <person name="Dewar K."/>
            <person name="FitzGerald M."/>
            <person name="Gilbert J."/>
            <person name="Gibson R."/>
            <person name="Gnerre S."/>
            <person name="Goldstein S."/>
            <person name="Grafham D.V."/>
            <person name="Grocock R."/>
            <person name="Hafez N."/>
            <person name="Hagopian D.S."/>
            <person name="Hart E."/>
            <person name="Norman C.H."/>
            <person name="Humphray S."/>
            <person name="Jaffe D.B."/>
            <person name="Jones M."/>
            <person name="Kamal M."/>
            <person name="Khodiyar V.K."/>
            <person name="LaButti K."/>
            <person name="Laird G."/>
            <person name="Lehoczky J."/>
            <person name="Liu X."/>
            <person name="Lokyitsang T."/>
            <person name="Loveland J."/>
            <person name="Lui A."/>
            <person name="Macdonald P."/>
            <person name="Major J.E."/>
            <person name="Matthews L."/>
            <person name="Mauceli E."/>
            <person name="McCarroll S.A."/>
            <person name="Mihalev A.H."/>
            <person name="Mudge J."/>
            <person name="Nguyen C."/>
            <person name="Nicol R."/>
            <person name="O'Leary S.B."/>
            <person name="Osoegawa K."/>
            <person name="Schwartz D.C."/>
            <person name="Shaw-Smith C."/>
            <person name="Stankiewicz P."/>
            <person name="Steward C."/>
            <person name="Swarbreck D."/>
            <person name="Venkataraman V."/>
            <person name="Whittaker C.A."/>
            <person name="Yang X."/>
            <person name="Zimmer A.R."/>
            <person name="Bradley A."/>
            <person name="Hubbard T."/>
            <person name="Birren B.W."/>
            <person name="Rogers J."/>
            <person name="Lander E.S."/>
            <person name="Nusbaum C."/>
        </authorList>
    </citation>
    <scope>NUCLEOTIDE SEQUENCE [LARGE SCALE GENOMIC DNA]</scope>
</reference>
<reference key="4">
    <citation type="submission" date="2005-09" db="EMBL/GenBank/DDBJ databases">
        <authorList>
            <person name="Mural R.J."/>
            <person name="Istrail S."/>
            <person name="Sutton G.G."/>
            <person name="Florea L."/>
            <person name="Halpern A.L."/>
            <person name="Mobarry C.M."/>
            <person name="Lippert R."/>
            <person name="Walenz B."/>
            <person name="Shatkay H."/>
            <person name="Dew I."/>
            <person name="Miller J.R."/>
            <person name="Flanigan M.J."/>
            <person name="Edwards N.J."/>
            <person name="Bolanos R."/>
            <person name="Fasulo D."/>
            <person name="Halldorsson B.V."/>
            <person name="Hannenhalli S."/>
            <person name="Turner R."/>
            <person name="Yooseph S."/>
            <person name="Lu F."/>
            <person name="Nusskern D.R."/>
            <person name="Shue B.C."/>
            <person name="Zheng X.H."/>
            <person name="Zhong F."/>
            <person name="Delcher A.L."/>
            <person name="Huson D.H."/>
            <person name="Kravitz S.A."/>
            <person name="Mouchard L."/>
            <person name="Reinert K."/>
            <person name="Remington K.A."/>
            <person name="Clark A.G."/>
            <person name="Waterman M.S."/>
            <person name="Eichler E.E."/>
            <person name="Adams M.D."/>
            <person name="Hunkapiller M.W."/>
            <person name="Myers E.W."/>
            <person name="Venter J.C."/>
        </authorList>
    </citation>
    <scope>NUCLEOTIDE SEQUENCE [LARGE SCALE GENOMIC DNA]</scope>
</reference>
<reference key="5">
    <citation type="journal article" date="2004" name="Genome Res.">
        <title>The status, quality, and expansion of the NIH full-length cDNA project: the Mammalian Gene Collection (MGC).</title>
        <authorList>
            <consortium name="The MGC Project Team"/>
        </authorList>
    </citation>
    <scope>NUCLEOTIDE SEQUENCE [LARGE SCALE MRNA] (ISOFORMS 1 AND 2)</scope>
    <source>
        <tissue>Brain</tissue>
        <tissue>Testis</tissue>
    </source>
</reference>
<reference key="6">
    <citation type="journal article" date="1993" name="Proc. Natl. Acad. Sci. U.S.A.">
        <title>Identification of a 3'--&gt;5' exonuclease activity associated with human RNA polymerase II.</title>
        <authorList>
            <person name="Wang D."/>
            <person name="Hawley D.K."/>
        </authorList>
    </citation>
    <scope>FUNCTION</scope>
    <scope>CATALYTIC ACTIVITY</scope>
    <scope>ACTIVITY REGULATION</scope>
</reference>
<reference key="7">
    <citation type="journal article" date="1998" name="J. Biol. Chem.">
        <title>Immunoaffinity purification and functional characterization of human transcription factor IIH and RNA polymerase II from clonal cell lines that conditionally express epitope-tagged subunits of the multiprotein complexes.</title>
        <authorList>
            <person name="Kershnar E."/>
            <person name="Wu S.-Y."/>
            <person name="Chiang C.-M."/>
        </authorList>
    </citation>
    <scope>FUNCTION</scope>
    <scope>CATALYTIC ACTIVITY</scope>
    <scope>IDENTIFICATION IN THE RNA POLYMERASE II CORE-COMPLEX</scope>
    <scope>SUBCELLULAR LOCATION</scope>
</reference>
<reference key="8">
    <citation type="journal article" date="1998" name="Nucleic Acids Res.">
        <title>SAF-B couples transcription and pre-mRNA splicing to SAR/MAR elements.</title>
        <authorList>
            <person name="Nayler O."/>
            <person name="Straetling W."/>
            <person name="Bourquin J.-P."/>
            <person name="Stagljar I."/>
            <person name="Lindemann L."/>
            <person name="Jasper H."/>
            <person name="Hartmann A.M."/>
            <person name="Fackelmeyer F.O."/>
            <person name="Ullrich A."/>
            <person name="Stamm S."/>
        </authorList>
    </citation>
    <scope>INTERACTION WITH SAFB</scope>
</reference>
<reference key="9">
    <citation type="journal article" date="1999" name="EMBO J.">
        <title>A novel RNA polymerase II-containing complex potentiates Tat-enhanced HIV-1 transcription.</title>
        <authorList>
            <person name="Parada C.A."/>
            <person name="Roeder R.G."/>
        </authorList>
    </citation>
    <scope>IDENTIFICATION IN A COMPLEX WITH HTATSF1; CCNT1; NCL; SUPT5H AND CDK9</scope>
</reference>
<reference key="10">
    <citation type="journal article" date="1999" name="Mol. Cell. Biol.">
        <title>Tat-SF1 protein associates with RAP30 and human SPT5 proteins.</title>
        <authorList>
            <person name="Kim J.B."/>
            <person name="Yamaguchi Y."/>
            <person name="Wada T."/>
            <person name="Handa H."/>
            <person name="Sharp P.A."/>
        </authorList>
    </citation>
    <scope>INTERACTION WITH HTATSF1</scope>
</reference>
<reference key="11">
    <citation type="journal article" date="2002" name="J. Mol. Biol.">
        <title>The structure of an FF domain from human HYPA/FBP11.</title>
        <authorList>
            <person name="Allen M."/>
            <person name="Friedler A."/>
            <person name="Schon O."/>
            <person name="Bycroft M."/>
        </authorList>
    </citation>
    <scope>INTERACTION WITH FNBP3</scope>
</reference>
<reference key="12">
    <citation type="journal article" date="2002" name="Mol. Cell. Proteomics">
        <title>Hyperphosphorylated C-terminal repeat domain-associating proteins in the nuclear proteome link transcription to DNA/chromatin modification and RNA processing.</title>
        <authorList>
            <person name="Carty S.M."/>
            <person name="Greenleaf A.L."/>
        </authorList>
    </citation>
    <scope>INTERACTION WITH SYNCRIP</scope>
</reference>
<reference key="13">
    <citation type="journal article" date="2003" name="Oncogene">
        <title>Synergism between p68 RNA helicase and the transcriptional coactivators CBP and p300.</title>
        <authorList>
            <person name="Rossow K.L."/>
            <person name="Janknecht R."/>
        </authorList>
    </citation>
    <scope>INTERACTION WITH DDX5</scope>
</reference>
<reference key="14">
    <citation type="journal article" date="2004" name="Anal. Chem.">
        <title>Robust phosphoproteomic profiling of tyrosine phosphorylation sites from human T cells using immobilized metal affinity chromatography and tandem mass spectrometry.</title>
        <authorList>
            <person name="Brill L.M."/>
            <person name="Salomon A.R."/>
            <person name="Ficarro S.B."/>
            <person name="Mukherji M."/>
            <person name="Stettler-Gill M."/>
            <person name="Peters E.C."/>
        </authorList>
    </citation>
    <scope>IDENTIFICATION BY MASS SPECTROMETRY [LARGE SCALE ANALYSIS]</scope>
    <source>
        <tissue>Leukemic T-cell</tissue>
    </source>
</reference>
<reference key="15">
    <citation type="journal article" date="2004" name="Gene">
        <title>Transcriptional activity and substrate recognition of cyclin T2 from P-TEFb.</title>
        <authorList>
            <person name="Kurosu T."/>
            <person name="Zhang F."/>
            <person name="Peterlin B.M."/>
        </authorList>
    </citation>
    <scope>INTERACTION WITH CCNT2</scope>
</reference>
<reference key="16">
    <citation type="journal article" date="2004" name="J. Biol. Chem.">
        <title>Cyclin L2, a novel RNA polymerase II-associated cyclin, is involved in pre-mRNA splicing and induces apoptosis of human hepatocellular carcinoma cells.</title>
        <authorList>
            <person name="Yang L."/>
            <person name="Li N."/>
            <person name="Wang C."/>
            <person name="Yu Y."/>
            <person name="Yuan L."/>
            <person name="Zhang M."/>
            <person name="Cao X."/>
        </authorList>
    </citation>
    <scope>INTERACTION WITH CCNL2</scope>
</reference>
<reference key="17">
    <citation type="journal article" date="2004" name="Mol. Cell">
        <title>Menin associates with a trithorax family histone methyltransferase complex and with the hoxc8 locus.</title>
        <authorList>
            <person name="Hughes C.M."/>
            <person name="Rozenblatt-Rosen O."/>
            <person name="Milne T.A."/>
            <person name="Copeland T.D."/>
            <person name="Levine S.S."/>
            <person name="Lee J.C."/>
            <person name="Hayes D.N."/>
            <person name="Shanmugam K.S."/>
            <person name="Bhattacharjee A."/>
            <person name="Biondi C.A."/>
            <person name="Kay G.F."/>
            <person name="Hayward N.K."/>
            <person name="Hess J.L."/>
            <person name="Meyerson M."/>
        </authorList>
    </citation>
    <scope>INTERACTION WITH MEN1</scope>
</reference>
<reference key="18">
    <citation type="journal article" date="2005" name="Biochem. Biophys. Res. Commun.">
        <title>Expression of the C-terminal domain of novel human SR-A1 protein: interaction with the CTD domain of RNA polymerase II.</title>
        <authorList>
            <person name="Katsarou M.E."/>
            <person name="Papakyriakou A."/>
            <person name="Katsaros N."/>
            <person name="Scorilas A."/>
        </authorList>
    </citation>
    <scope>INTERACTION WITH SFRS19</scope>
</reference>
<reference key="19">
    <citation type="journal article" date="2005" name="J. Biol. Chem.">
        <title>Identification and characterization of a novel human histone H3 lysine 36 specific methyltransferase.</title>
        <authorList>
            <person name="Sun X.-J."/>
            <person name="Wei J."/>
            <person name="Wu X.-Y."/>
            <person name="Hu M."/>
            <person name="Wang L."/>
            <person name="Wang H.-H."/>
            <person name="Zhang Q.-H."/>
            <person name="Chen S.-J."/>
            <person name="Huang Q.-H."/>
            <person name="Chen Z."/>
        </authorList>
    </citation>
    <scope>INTERACTION WITH SETD2</scope>
</reference>
<reference key="20">
    <citation type="journal article" date="2005" name="Proc. Natl. Acad. Sci. U.S.A.">
        <title>Solution structure of the Set2-Rpb1 interacting domain of human Set2 and its interaction with the hyperphosphorylated C-terminal domain of Rpb1.</title>
        <authorList>
            <person name="Li M."/>
            <person name="Phatnani H.P."/>
            <person name="Guan Z."/>
            <person name="Sage H."/>
            <person name="Greenleaf A.L."/>
            <person name="Zhou P."/>
        </authorList>
    </citation>
    <scope>INTERACTION WITH SETD2</scope>
</reference>
<reference key="21">
    <citation type="journal article" date="2006" name="Nat. Biotechnol.">
        <title>A probability-based approach for high-throughput protein phosphorylation analysis and site localization.</title>
        <authorList>
            <person name="Beausoleil S.A."/>
            <person name="Villen J."/>
            <person name="Gerber S.A."/>
            <person name="Rush J."/>
            <person name="Gygi S.P."/>
        </authorList>
    </citation>
    <scope>PHOSPHORYLATION [LARGE SCALE ANALYSIS] AT TYR-1909 AND TYR-1923</scope>
    <scope>IDENTIFICATION BY MASS SPECTROMETRY [LARGE SCALE ANALYSIS]</scope>
    <source>
        <tissue>Cervix carcinoma</tissue>
    </source>
</reference>
<reference key="22">
    <citation type="journal article" date="2006" name="Oncogene">
        <title>The human homologue of the RNA polymerase II-associated factor 1 (hPaf1), localized on the 19q13 amplicon, is associated with tumorigenesis.</title>
        <authorList>
            <person name="Moniaux N."/>
            <person name="Nemos C."/>
            <person name="Schmied B.M."/>
            <person name="Chauhan S.C."/>
            <person name="Deb S."/>
            <person name="Morikane K."/>
            <person name="Choudhury A."/>
            <person name="Vanlith M."/>
            <person name="Sutherlin M."/>
            <person name="Sikela J.M."/>
            <person name="Hollingsworth M.A."/>
            <person name="Batra S.K."/>
        </authorList>
    </citation>
    <scope>INTERACTION WITH PAF1 IN PAF1/RNA POLYMERASE II</scope>
    <source>
        <tissue>Fetal pancreas</tissue>
    </source>
</reference>
<reference key="23">
    <citation type="journal article" date="2007" name="Genes Dev.">
        <title>The Spt6 SH2 domain binds Ser2-P RNAPII to direct Iws1-dependent mRNA splicing and export.</title>
        <authorList>
            <person name="Yoh S.M."/>
            <person name="Cho H."/>
            <person name="Pickle L."/>
            <person name="Evans R.M."/>
            <person name="Jones K.A."/>
        </authorList>
    </citation>
    <scope>INTERACTION WITH SUPT6H</scope>
    <scope>PHOSPHORYLATION</scope>
</reference>
<reference key="24">
    <citation type="journal article" date="2008" name="Biochem. Biophys. Res. Commun.">
        <title>The human interferon-regulated ISG95 protein interacts with RNA polymerase II and shows methyltransferase activity.</title>
        <authorList>
            <person name="Haline-Vaz T."/>
            <person name="Silva T.C.L."/>
            <person name="Zanchin N.I.T."/>
        </authorList>
    </citation>
    <scope>INTERACTION WITH CMTR1</scope>
</reference>
<reference key="25">
    <citation type="journal article" date="2008" name="J. Biol. Chem.">
        <title>Snapshots of the RNA processing factor SCAF8 bound to different phosphorylated forms of the carboxyl-terminal domain of RNA polymerase II.</title>
        <authorList>
            <person name="Becker R."/>
            <person name="Loll B."/>
            <person name="Meinhart A."/>
        </authorList>
    </citation>
    <scope>INTERACTION WITH SCAF8</scope>
</reference>
<reference key="26">
    <citation type="journal article" date="2008" name="J. Virol.">
        <title>Transcription of hepatitis delta virus RNA by RNA polymerase II.</title>
        <authorList>
            <person name="Chang J."/>
            <person name="Nie X."/>
            <person name="Chang H.E."/>
            <person name="Han Z."/>
            <person name="Taylor J."/>
        </authorList>
    </citation>
    <scope>FUNCTION AS RNA-DIRECTED RNA POLYMERASE (MICROBIAL INFECTION)</scope>
</reference>
<reference key="27">
    <citation type="journal article" date="2008" name="Mol. Cell. Biol.">
        <title>Wdr82 is a C-terminal domain-binding protein that recruits the Setd1A Histone H3-Lys4 methyltransferase complex to transcription start sites of transcribed human genes.</title>
        <authorList>
            <person name="Lee J.H."/>
            <person name="Skalnik D.G."/>
        </authorList>
    </citation>
    <scope>INTERACTION WITH SETD1A; SETD1B AND WDR82</scope>
</reference>
<reference key="28">
    <citation type="journal article" date="2008" name="Proc. Natl. Acad. Sci. U.S.A.">
        <title>A quantitative atlas of mitotic phosphorylation.</title>
        <authorList>
            <person name="Dephoure N."/>
            <person name="Zhou C."/>
            <person name="Villen J."/>
            <person name="Beausoleil S.A."/>
            <person name="Bakalarski C.E."/>
            <person name="Elledge S.J."/>
            <person name="Gygi S.P."/>
        </authorList>
    </citation>
    <scope>PHOSPHORYLATION [LARGE SCALE ANALYSIS] AT SER-1849; TYR-1874; SER-1896; TYR-1909; SER-1913; SER-1920; TYR-1923; SER-1927 AND SER-1934</scope>
    <scope>IDENTIFICATION BY MASS SPECTROMETRY [LARGE SCALE ANALYSIS]</scope>
    <source>
        <tissue>Cervix carcinoma</tissue>
    </source>
</reference>
<reference key="29">
    <citation type="journal article" date="2009" name="Anal. Chem.">
        <title>Lys-N and trypsin cover complementary parts of the phosphoproteome in a refined SCX-based approach.</title>
        <authorList>
            <person name="Gauci S."/>
            <person name="Helbig A.O."/>
            <person name="Slijper M."/>
            <person name="Krijgsveld J."/>
            <person name="Heck A.J."/>
            <person name="Mohammed S."/>
        </authorList>
    </citation>
    <scope>ACETYLATION [LARGE SCALE ANALYSIS] AT MET-1</scope>
    <scope>IDENTIFICATION BY MASS SPECTROMETRY [LARGE SCALE ANALYSIS]</scope>
</reference>
<reference key="30">
    <citation type="journal article" date="2009" name="J. Biol. Chem.">
        <title>MCAF1/AM is involved in Sp1-mediated maintenance of cancer-associated telomerase activity.</title>
        <authorList>
            <person name="Liu L."/>
            <person name="Ishihara K."/>
            <person name="Ichimura T."/>
            <person name="Fujita N."/>
            <person name="Hino S."/>
            <person name="Tomita S."/>
            <person name="Watanabe S."/>
            <person name="Saitoh N."/>
            <person name="Ito T."/>
            <person name="Nakao M."/>
        </authorList>
    </citation>
    <scope>INTERACTION WITH ATF7IP</scope>
</reference>
<reference key="31">
    <citation type="journal article" date="2009" name="Mol. Cell">
        <title>TFIIH kinase places bivalent marks on the carboxy-terminal domain of RNA polymerase II.</title>
        <authorList>
            <person name="Akhtar M.S."/>
            <person name="Heidemann M."/>
            <person name="Tietjen J.R."/>
            <person name="Zhang D.W."/>
            <person name="Chapman R.D."/>
            <person name="Eick D."/>
            <person name="Ansari A.Z."/>
        </authorList>
    </citation>
    <scope>PHOSPHORYLATION BY CDK7</scope>
</reference>
<reference key="32">
    <citation type="journal article" date="2009" name="Mol. Cell. Biol.">
        <title>TFIIH-associated Cdk7 kinase functions in phosphorylation of C-terminal domain Ser7 residues, promoter-proximal pausing, and termination by RNA polymerase II.</title>
        <authorList>
            <person name="Glover-Cutter K."/>
            <person name="Larochelle S."/>
            <person name="Erickson B."/>
            <person name="Zhang C."/>
            <person name="Shokat K."/>
            <person name="Fisher R.P."/>
            <person name="Bentley D.L."/>
        </authorList>
    </citation>
    <scope>PHOSPHORYLATION BY CDK7 AND CDK9</scope>
</reference>
<reference key="33">
    <citation type="journal article" date="2009" name="Nucleic Acids Res.">
        <title>Binding to DNA of the RNA-polymerase II C-terminal domain allows discrimination between Cdk7 and Cdk9 phosphorylation.</title>
        <authorList>
            <person name="Lolli G."/>
        </authorList>
    </citation>
    <scope>PHOSPHORYLATION BY CDK7</scope>
</reference>
<reference key="34">
    <citation type="journal article" date="2009" name="Sci. Signal.">
        <title>Quantitative phosphoproteomic analysis of T cell receptor signaling reveals system-wide modulation of protein-protein interactions.</title>
        <authorList>
            <person name="Mayya V."/>
            <person name="Lundgren D.H."/>
            <person name="Hwang S.-I."/>
            <person name="Rezaul K."/>
            <person name="Wu L."/>
            <person name="Eng J.K."/>
            <person name="Rodionov V."/>
            <person name="Han D.K."/>
        </authorList>
    </citation>
    <scope>PHOSPHORYLATION [LARGE SCALE ANALYSIS] AT SER-1843; THR-1854; SER-1878; SER-1882; SER-1899; SER-1913; SER-1917; SER-1920; SER-1927; SER-1931 AND SER-1934</scope>
    <scope>IDENTIFICATION BY MASS SPECTROMETRY [LARGE SCALE ANALYSIS]</scope>
    <source>
        <tissue>Leukemic T-cell</tissue>
    </source>
</reference>
<reference key="35">
    <citation type="journal article" date="2010" name="Mol. Cell. Biol.">
        <title>RecQL5 promotes genome stabilization through two parallel mechanisms--interacting with RNA polymerase II and acting as a helicase.</title>
        <authorList>
            <person name="Islam M.N."/>
            <person name="Fox D. III"/>
            <person name="Guo R."/>
            <person name="Enomoto T."/>
            <person name="Wang W."/>
        </authorList>
    </citation>
    <scope>INTERACTION WITH RECQL5R</scope>
</reference>
<reference key="36">
    <citation type="journal article" date="2010" name="Sci. Signal.">
        <title>Quantitative phosphoproteomics reveals widespread full phosphorylation site occupancy during mitosis.</title>
        <authorList>
            <person name="Olsen J.V."/>
            <person name="Vermeulen M."/>
            <person name="Santamaria A."/>
            <person name="Kumar C."/>
            <person name="Miller M.L."/>
            <person name="Jensen L.J."/>
            <person name="Gnad F."/>
            <person name="Cox J."/>
            <person name="Jensen T.S."/>
            <person name="Nigg E.A."/>
            <person name="Brunak S."/>
            <person name="Mann M."/>
        </authorList>
    </citation>
    <scope>IDENTIFICATION BY MASS SPECTROMETRY [LARGE SCALE ANALYSIS]</scope>
    <source>
        <tissue>Cervix carcinoma</tissue>
    </source>
</reference>
<reference key="37">
    <citation type="journal article" date="2011" name="BMC Syst. Biol.">
        <title>Initial characterization of the human central proteome.</title>
        <authorList>
            <person name="Burkard T.R."/>
            <person name="Planyavsky M."/>
            <person name="Kaupe I."/>
            <person name="Breitwieser F.P."/>
            <person name="Buerckstuemmer T."/>
            <person name="Bennett K.L."/>
            <person name="Superti-Furga G."/>
            <person name="Colinge J."/>
        </authorList>
    </citation>
    <scope>IDENTIFICATION BY MASS SPECTROMETRY [LARGE SCALE ANALYSIS]</scope>
</reference>
<reference key="38">
    <citation type="journal article" date="2011" name="Genes Dev.">
        <title>The RNA polymerase II C-terminal domain promotes splicing activation through recruitment of a U2AF65-Prp19 complex.</title>
        <authorList>
            <person name="David C.J."/>
            <person name="Boyne A.R."/>
            <person name="Millhouse S.R."/>
            <person name="Manley J.L."/>
        </authorList>
    </citation>
    <scope>INTERACTION WITH U2AF2</scope>
</reference>
<reference key="39">
    <citation type="journal article" date="2011" name="J. Biol. Chem.">
        <title>Transcription factor IIS cooperates with the E3 ligase UBR5 to ubiquitinate the CDK9 subunit of the positive transcription elongation factor B.</title>
        <authorList>
            <person name="Cojocaru M."/>
            <person name="Bouchard A."/>
            <person name="Cloutier P."/>
            <person name="Cooper J.J."/>
            <person name="Varzavand K."/>
            <person name="Price D.H."/>
            <person name="Coulombe B."/>
        </authorList>
    </citation>
    <scope>PHOSPHORYLATION BY CDK9</scope>
</reference>
<reference key="40">
    <citation type="journal article" date="2011" name="Sci. Signal.">
        <title>System-wide temporal characterization of the proteome and phosphoproteome of human embryonic stem cell differentiation.</title>
        <authorList>
            <person name="Rigbolt K.T."/>
            <person name="Prokhorova T.A."/>
            <person name="Akimov V."/>
            <person name="Henningsen J."/>
            <person name="Johansen P.T."/>
            <person name="Kratchmarova I."/>
            <person name="Kassem M."/>
            <person name="Mann M."/>
            <person name="Olsen J.V."/>
            <person name="Blagoev B."/>
        </authorList>
    </citation>
    <scope>PHOSPHORYLATION [LARGE SCALE ANALYSIS] AT SER-1917 AND SER-1931</scope>
    <scope>IDENTIFICATION BY MASS SPECTROMETRY [LARGE SCALE ANALYSIS]</scope>
</reference>
<reference key="41">
    <citation type="journal article" date="2011" name="Science">
        <title>The C-terminal domain of RNA polymerase II is modified by site-specific methylation.</title>
        <authorList>
            <person name="Sims R.J. III"/>
            <person name="Rojas L.A."/>
            <person name="Beck D."/>
            <person name="Bonasio R."/>
            <person name="Schuller R."/>
            <person name="Drury W.J. III"/>
            <person name="Eick D."/>
            <person name="Reinberg D."/>
        </authorList>
    </citation>
    <scope>METHYLATION AT ARG-1810 BY CARM1</scope>
    <scope>MUTAGENESIS OF ARG-1810</scope>
</reference>
<reference key="42">
    <citation type="journal article" date="2012" name="Mol. Cell">
        <title>Ser7 phosphorylation of the CTD recruits the RPAP2 Ser5 phosphatase to snRNA genes.</title>
        <authorList>
            <person name="Egloff S."/>
            <person name="Zaborowska J."/>
            <person name="Laitem C."/>
            <person name="Kiss T."/>
            <person name="Murphy S."/>
        </authorList>
    </citation>
    <scope>PHOSPHORYLATION</scope>
    <scope>DOMAIN</scope>
</reference>
<reference key="43">
    <citation type="journal article" date="2012" name="Nat. Genet.">
        <title>Mutations in UVSSA cause UV-sensitive syndrome and impair RNA polymerase IIo processing in transcription-coupled nucleotide-excision repair.</title>
        <authorList>
            <person name="Nakazawa Y."/>
            <person name="Sasaki K."/>
            <person name="Mitsutake N."/>
            <person name="Matsuse M."/>
            <person name="Shimada M."/>
            <person name="Nardo T."/>
            <person name="Takahashi Y."/>
            <person name="Ohyama K."/>
            <person name="Ito K."/>
            <person name="Mishima H."/>
            <person name="Nomura M."/>
            <person name="Kinoshita A."/>
            <person name="Ono S."/>
            <person name="Takenaka K."/>
            <person name="Masuyama R."/>
            <person name="Kudo T."/>
            <person name="Slor H."/>
            <person name="Utani A."/>
            <person name="Tateishi S."/>
            <person name="Yamashita S."/>
            <person name="Stefanini M."/>
            <person name="Lehmann A.R."/>
            <person name="Yoshiura K.I."/>
            <person name="Ogi T."/>
        </authorList>
    </citation>
    <scope>UBIQUITINATION</scope>
</reference>
<reference key="44">
    <citation type="journal article" date="2012" name="PLoS ONE">
        <title>Herpes simplex virus 1 ICP22 inhibits the transcription of viral gene promoters by binding to and blocking the recruitment of P-TEFb.</title>
        <authorList>
            <person name="Guo L."/>
            <person name="Wu W.J."/>
            <person name="Liu L.D."/>
            <person name="Wang L.C."/>
            <person name="Zhang Y."/>
            <person name="Wu L.Q."/>
            <person name="Guan Y."/>
            <person name="Li Q.H."/>
        </authorList>
    </citation>
    <scope>INTERACTION WITH HERPES SIMPLEX VIRUS 1 PROTEIN ICP22 (MICROBIAL INFECTION)</scope>
</reference>
<reference key="45">
    <citation type="journal article" date="2013" name="EMBO J.">
        <title>RNA polymerase II acts as an RNA-dependent RNA polymerase to extend and destabilize a non-coding RNA.</title>
        <authorList>
            <person name="Wagner S.D."/>
            <person name="Yakovchuk P."/>
            <person name="Gilman B."/>
            <person name="Ponicsan S.L."/>
            <person name="Drullinger L.F."/>
            <person name="Kugel J.F."/>
            <person name="Goodrich J.A."/>
        </authorList>
    </citation>
    <scope>FUNCTION</scope>
    <scope>CATALYTIC ACTIVITY</scope>
</reference>
<reference key="46">
    <citation type="journal article" date="2013" name="J. Proteome Res.">
        <title>Toward a comprehensive characterization of a human cancer cell phosphoproteome.</title>
        <authorList>
            <person name="Zhou H."/>
            <person name="Di Palma S."/>
            <person name="Preisinger C."/>
            <person name="Peng M."/>
            <person name="Polat A.N."/>
            <person name="Heck A.J."/>
            <person name="Mohammed S."/>
        </authorList>
    </citation>
    <scope>PHOSPHORYLATION [LARGE SCALE ANALYSIS] AT SER-27; SER-217; SER-1850; SER-1864; SER-1868; SER-1878; SER-1882; THR-1885; SER-1899; SER-1913; SER-1920; SER-1927 AND SER-1934</scope>
    <scope>IDENTIFICATION BY MASS SPECTROMETRY [LARGE SCALE ANALYSIS]</scope>
    <source>
        <tissue>Cervix carcinoma</tissue>
        <tissue>Erythroleukemia</tissue>
    </source>
</reference>
<reference key="47">
    <citation type="journal article" date="2013" name="Mol. Cell">
        <title>Acetylation of RNA polymerase II regulates growth-factor-induced gene transcription in mammalian cells.</title>
        <authorList>
            <person name="Schroeder S."/>
            <person name="Herker E."/>
            <person name="Itzen F."/>
            <person name="He D."/>
            <person name="Thomas S."/>
            <person name="Gilchrist D.A."/>
            <person name="Kaehlcke K."/>
            <person name="Cho S."/>
            <person name="Pollard K.S."/>
            <person name="Capra J.A."/>
            <person name="Schnoelzer M."/>
            <person name="Cole P.A."/>
            <person name="Geyer M."/>
            <person name="Bruneau B.G."/>
            <person name="Adelman K."/>
            <person name="Ott M."/>
        </authorList>
    </citation>
    <scope>FUNCTION</scope>
    <scope>CATALYTIC ACTIVITY</scope>
    <scope>ACETYLATION</scope>
    <scope>MUTAGENESIS OF LYS-1838; LYS-1859; LYS-1866; LYS-1873; LYS-1887; LYS-1908; LYS-1922 AND LYS-1936</scope>
</reference>
<reference key="48">
    <citation type="journal article" date="2013" name="Mol. Cell. Biol.">
        <title>Senataxin, defective in the neurodegenerative disorder ataxia with oculomotor apraxia 2, lies at the interface of transcription and the DNA damage response.</title>
        <authorList>
            <person name="Yuce O."/>
            <person name="West S.C."/>
        </authorList>
    </citation>
    <scope>INTERACTION WITH SETX</scope>
</reference>
<reference key="49">
    <citation type="journal article" date="2013" name="Nat. Commun.">
        <title>GANP regulates recruitment of AID to immunoglobulin variable regions by modulating transcription and nucleosome occupancy.</title>
        <authorList>
            <person name="Singh S.K."/>
            <person name="Maeda K."/>
            <person name="Eid M.M."/>
            <person name="Almofty S.A."/>
            <person name="Ono M."/>
            <person name="Pham P."/>
            <person name="Goodman M.F."/>
            <person name="Sakaguchi N."/>
        </authorList>
    </citation>
    <scope>INTERACTION WITH MCM3AP</scope>
</reference>
<reference key="50">
    <citation type="journal article" date="2014" name="Cell Rep.">
        <title>Phosphorylation-dependent PIH1D1 interactions define substrate specificity of the R2TP cochaperone complex.</title>
        <authorList>
            <person name="Horejsi Z."/>
            <person name="Stach L."/>
            <person name="Flower T.G."/>
            <person name="Joshi D."/>
            <person name="Flynn H."/>
            <person name="Skehel J.M."/>
            <person name="O'Reilly N.J."/>
            <person name="Ogrodowicz R.W."/>
            <person name="Smerdon S.J."/>
            <person name="Boulton S.J."/>
        </authorList>
    </citation>
    <scope>INTERACTION WITH PIH1D1</scope>
</reference>
<reference key="51">
    <citation type="journal article" date="2014" name="J. Proteomics">
        <title>An enzyme assisted RP-RPLC approach for in-depth analysis of human liver phosphoproteome.</title>
        <authorList>
            <person name="Bian Y."/>
            <person name="Song C."/>
            <person name="Cheng K."/>
            <person name="Dong M."/>
            <person name="Wang F."/>
            <person name="Huang J."/>
            <person name="Sun D."/>
            <person name="Wang L."/>
            <person name="Ye M."/>
            <person name="Zou H."/>
        </authorList>
    </citation>
    <scope>PHOSPHORYLATION [LARGE SCALE ANALYSIS] AT TYR-1874; SER-1906; TYR-1909 AND TYR-1923</scope>
    <scope>IDENTIFICATION BY MASS SPECTROMETRY [LARGE SCALE ANALYSIS]</scope>
    <source>
        <tissue>Liver</tissue>
    </source>
</reference>
<reference key="52">
    <citation type="journal article" date="2015" name="Elife">
        <title>Methylation of RNA polymerase II non-consensus Lysine residues marks early transcription in mammalian cells.</title>
        <authorList>
            <person name="Dias J.D."/>
            <person name="Rito T."/>
            <person name="Torlai Triglia E."/>
            <person name="Kukalev A."/>
            <person name="Ferrai C."/>
            <person name="Chotalia M."/>
            <person name="Brookes E."/>
            <person name="Kimura H."/>
            <person name="Pombo A."/>
        </authorList>
    </citation>
    <scope>METHYLATION</scope>
    <scope>ACETYLATION</scope>
</reference>
<reference key="53">
    <citation type="journal article" date="2015" name="Mol. Cell">
        <title>THZ1 Reveals Roles for Cdk7 in Co-transcriptional Capping and Pausing.</title>
        <authorList>
            <person name="Nilson K.A."/>
            <person name="Guo J."/>
            <person name="Turek M.E."/>
            <person name="Brogie J.E."/>
            <person name="Delaney E."/>
            <person name="Luse D.S."/>
            <person name="Price D.H."/>
        </authorList>
    </citation>
    <scope>PHOSPHORYLATION BY CDK7</scope>
</reference>
<reference key="54">
    <citation type="journal article" date="2015" name="Transcription">
        <title>Site-specific methylation and acetylation of lysine residues in the C-terminal domain (CTD) of RNA polymerase II.</title>
        <authorList>
            <person name="Voss K."/>
            <person name="Forne I."/>
            <person name="Descostes N."/>
            <person name="Hintermair C."/>
            <person name="Schueller R."/>
            <person name="Maqbool M.A."/>
            <person name="Heidemann M."/>
            <person name="Flatley A."/>
            <person name="Imhof A."/>
            <person name="Gut M."/>
            <person name="Gut I."/>
            <person name="Kremmer E."/>
            <person name="Andrau J.C."/>
            <person name="Eick D."/>
        </authorList>
    </citation>
    <scope>SUBCELLULAR LOCATION</scope>
    <scope>ACETYLATION AT LYS-1866; LYS-1887; LYS-1922 AND LYS-1936</scope>
    <scope>METHYLATION AT LYS-1859; LYS-1866; LYS-1873; LYS-1887; LYS-1922 AND LYS-1936</scope>
    <scope>PHOSPHORYLATION AT THR-1840; SER-1843; SER-1845; SER-1849; SER-1850; SER-1857; TYR-1860; SER-1861; THR-1863; SER-1864; TYR-1867; THR-1870; TYR-1874; SER-1875; THR-1877; SER-1878; TYR-1881; SER-1882; TYR-1909; THR-1912; SER-1913; THR-1915; TYR-1916; SER-1917; THR-1919; SER-1920; TYR-1923; THR-1926; SER-1927; THR-1929; TYR-1930; SER-1931; THR-1933 AND SER-1934</scope>
</reference>
<reference key="55">
    <citation type="journal article" date="2015" name="Proc. Natl. Acad. Sci. U.S.A.">
        <title>FUS functions in coupling transcription to splicing by mediating an interaction between RNAP II and U1 snRNP.</title>
        <authorList>
            <person name="Yu Y."/>
            <person name="Reed R."/>
        </authorList>
    </citation>
    <scope>INTERACTION WITH FUS</scope>
    <scope>FUNCTION</scope>
</reference>
<reference key="56">
    <citation type="journal article" date="2016" name="J. Biol. Chem.">
        <title>Selective Recognition of H3.1K36 Dimethylation/H4K16 Acetylation Facilitates the Regulation of All-trans-retinoic Acid (ATRA)-responsive Genes by Putative Chromatin Reader ZMYND8.</title>
        <authorList>
            <person name="Adhikary S."/>
            <person name="Sanyal S."/>
            <person name="Basu M."/>
            <person name="Sengupta I."/>
            <person name="Sen S."/>
            <person name="Srivastava D.K."/>
            <person name="Roy S."/>
            <person name="Das C."/>
        </authorList>
    </citation>
    <scope>INTERACTION WITH ZMYND8</scope>
</reference>
<reference key="57">
    <citation type="journal article" date="2016" name="Nature">
        <title>SMN and symmetric arginine dimethylation of RNA polymerase II C-terminal domain control termination.</title>
        <authorList>
            <person name="Yanling Zhao D."/>
            <person name="Gish G."/>
            <person name="Braunschweig U."/>
            <person name="Li Y."/>
            <person name="Ni Z."/>
            <person name="Schmitges F.W."/>
            <person name="Zhong G."/>
            <person name="Liu K."/>
            <person name="Li W."/>
            <person name="Moffat J."/>
            <person name="Vedadi M."/>
            <person name="Min J."/>
            <person name="Pawson T.J."/>
            <person name="Blencowe B.J."/>
            <person name="Greenblatt J.F."/>
        </authorList>
    </citation>
    <scope>INTERACTION WITH TDRD3; PRMT5; SETX; SMN1 AND XRN2</scope>
    <scope>METHYLATION AT ARG-1603 AND ARG-1810</scope>
    <scope>MUTAGENESIS OF ARG-1810</scope>
</reference>
<reference key="58">
    <citation type="journal article" date="2017" name="Cell Rep.">
        <title>Transcription Dynamics Prevent RNA-Mediated Genomic Instability through SRPK2-Dependent DDX23 Phosphorylation.</title>
        <authorList>
            <person name="Sridhara S.C."/>
            <person name="Carvalho S."/>
            <person name="Grosso A.R."/>
            <person name="Gallego-Paez L.M."/>
            <person name="Carmo-Fonseca M."/>
            <person name="de Almeida S.F."/>
        </authorList>
    </citation>
    <scope>INTERACTION WITH SRPK2</scope>
    <scope>SUBCELLULAR LOCATION</scope>
    <scope>PHOSPHORYLATION</scope>
</reference>
<reference key="59">
    <citation type="journal article" date="2017" name="Cell Rep.">
        <title>Human TFIIH Kinase CDK7 Regulates Transcription-Associated Chromatin Modifications.</title>
        <authorList>
            <person name="Ebmeier C.C."/>
            <person name="Erickson B."/>
            <person name="Allen B.L."/>
            <person name="Allen M.A."/>
            <person name="Kim H."/>
            <person name="Fong N."/>
            <person name="Jacobsen J.R."/>
            <person name="Liang K."/>
            <person name="Shilatifard A."/>
            <person name="Dowell R.D."/>
            <person name="Old W.M."/>
            <person name="Bentley D.L."/>
            <person name="Taatjes D.J."/>
        </authorList>
    </citation>
    <scope>PHOSPHORYLATION BY CDK7</scope>
</reference>
<reference key="60">
    <citation type="journal article" date="2017" name="Genes Dev.">
        <title>The human initiator is a distinct and abundant element that is precisely positioned in focused core promoters.</title>
        <authorList>
            <person name="Vo Ngoc L."/>
            <person name="Cassidy C.J."/>
            <person name="Huang C.Y."/>
            <person name="Duttke S.H."/>
            <person name="Kadonaga J.T."/>
        </authorList>
    </citation>
    <scope>FUNCTION</scope>
</reference>
<reference key="61">
    <citation type="journal article" date="2018" name="Proc. Natl. Acad. Sci. U.S.A.">
        <title>Structural-functional interactions of NS1-BP protein with the splicing and mRNA export machineries for viral and host gene expression.</title>
        <authorList>
            <person name="Zhang K."/>
            <person name="Shang G."/>
            <person name="Padavannil A."/>
            <person name="Wang J."/>
            <person name="Sakthivel R."/>
            <person name="Chen X."/>
            <person name="Kim M."/>
            <person name="Thompson M.G."/>
            <person name="Garcia-Sastre A."/>
            <person name="Lynch K.W."/>
            <person name="Chen Z.J."/>
            <person name="Chook Y.M."/>
            <person name="Fontoura B.M.A."/>
        </authorList>
    </citation>
    <scope>INTERACTION WITH IVNS1ABP</scope>
</reference>
<reference key="62">
    <citation type="journal article" date="2020" name="Cell">
        <title>Ubiquitination of DNA Damage-Stalled RNAPII Promotes Transcription-Coupled Repair.</title>
        <authorList>
            <person name="Nakazawa Y."/>
            <person name="Hara Y."/>
            <person name="Oka Y."/>
            <person name="Komine O."/>
            <person name="van den Heuvel D."/>
            <person name="Guo C."/>
            <person name="Daigaku Y."/>
            <person name="Isono M."/>
            <person name="He Y."/>
            <person name="Shimada M."/>
            <person name="Kato K."/>
            <person name="Jia N."/>
            <person name="Hashimoto S."/>
            <person name="Kotani Y."/>
            <person name="Miyoshi Y."/>
            <person name="Tanaka M."/>
            <person name="Sobue A."/>
            <person name="Mitsutake N."/>
            <person name="Suganami T."/>
            <person name="Masuda A."/>
            <person name="Ohno K."/>
            <person name="Nakada S."/>
            <person name="Mashimo T."/>
            <person name="Yamanaka K."/>
            <person name="Luijsterburg M.S."/>
            <person name="Ogi T."/>
        </authorList>
    </citation>
    <scope>INTERACTION WITH UVSSA; ERCCC6 AND THE TFIIH COMPLEX</scope>
    <scope>IDENTIFICATION BY MASS SPECTROMETRY</scope>
    <scope>UBIQUITINATION AT LYS-1268</scope>
    <scope>MUTAGENESIS OF LYS-1268</scope>
</reference>
<reference key="63">
    <citation type="journal article" date="2020" name="Cell">
        <title>Regulation of the RNAPII Pool Is Integral to the DNA Damage Response.</title>
        <authorList>
            <person name="Tufegdzic Vidakovic A."/>
            <person name="Mitter R."/>
            <person name="Kelly G.P."/>
            <person name="Neumann M."/>
            <person name="Harreman M."/>
            <person name="Rodriguez-Martinez M."/>
            <person name="Herlihy A."/>
            <person name="Weems J.C."/>
            <person name="Boeing S."/>
            <person name="Encheva V."/>
            <person name="Gaul L."/>
            <person name="Milligan L."/>
            <person name="Tollervey D."/>
            <person name="Conaway R.C."/>
            <person name="Conaway J.W."/>
            <person name="Snijders A.P."/>
            <person name="Stewart A."/>
            <person name="Svejstrup J.Q."/>
        </authorList>
    </citation>
    <scope>PHOSPHORYLATION</scope>
    <scope>UBIQUITINATION AT LYS-1268</scope>
    <scope>MUTAGENESIS OF LYS-1268</scope>
</reference>
<reference key="64">
    <citation type="journal article" date="2020" name="Cell Rep.">
        <title>WDR82/PNUTS-PP1 prevents transcription-replication conflicts by promoting RNA polymerase II degradation on chromatin.</title>
        <authorList>
            <person name="Landsverk H.B."/>
            <person name="Sandquist L.E."/>
            <person name="Bay L.T.E."/>
            <person name="Steurer B."/>
            <person name="Campsteijn C."/>
            <person name="Landsverk O.J.B."/>
            <person name="Marteijn J.A."/>
            <person name="Petermann E."/>
            <person name="Trinkle-Mulcahy L."/>
            <person name="Syljuaasen R.G."/>
        </authorList>
    </citation>
    <scope>DEPHOSPHORYLATION BY THE PNUTS-PP1 COMPLEX</scope>
</reference>
<reference key="65">
    <citation type="journal article" date="2020" name="Science">
        <title>Identification of Integrator-PP2A complex (INTAC), an RNA polymerase II phosphatase.</title>
        <authorList>
            <person name="Zheng H."/>
            <person name="Qi Y."/>
            <person name="Hu S."/>
            <person name="Cao X."/>
            <person name="Xu C."/>
            <person name="Yin Z."/>
            <person name="Chen X."/>
            <person name="Li Y."/>
            <person name="Liu W."/>
            <person name="Li J."/>
            <person name="Wang J."/>
            <person name="Wei G."/>
            <person name="Liang K."/>
            <person name="Chen F.X."/>
            <person name="Xu Y."/>
        </authorList>
    </citation>
    <scope>DEPHOSPHORYLATION BY THE INTAC COMPLEX</scope>
</reference>
<reference key="66">
    <citation type="journal article" date="2021" name="Cell">
        <title>The PP2A-Integrator-CDK9 axis fine-tunes transcription and can be targeted therapeutically in cancer.</title>
        <authorList>
            <person name="Vervoort S.J."/>
            <person name="Welsh S.A."/>
            <person name="Devlin J.R."/>
            <person name="Barbieri E."/>
            <person name="Knight D.A."/>
            <person name="Offley S."/>
            <person name="Bjelosevic S."/>
            <person name="Costacurta M."/>
            <person name="Todorovski I."/>
            <person name="Kearney C.J."/>
            <person name="Sandow J.J."/>
            <person name="Fan Z."/>
            <person name="Blyth B."/>
            <person name="McLeod V."/>
            <person name="Vissers J.H.A."/>
            <person name="Pavic K."/>
            <person name="Martin B.P."/>
            <person name="Gregory G."/>
            <person name="Demosthenous E."/>
            <person name="Zethoven M."/>
            <person name="Kong I.Y."/>
            <person name="Hawkins E.D."/>
            <person name="Hogg S.J."/>
            <person name="Kelly M.J."/>
            <person name="Newbold A."/>
            <person name="Simpson K.J."/>
            <person name="Kauko O."/>
            <person name="Harvey K.F."/>
            <person name="Ohlmeyer M."/>
            <person name="Westermarck J."/>
            <person name="Gray N."/>
            <person name="Gardini A."/>
            <person name="Johnstone R.W."/>
        </authorList>
    </citation>
    <scope>DEPHOSPHORYLATION BY THE INTAC COMPLEX</scope>
</reference>
<reference key="67">
    <citation type="journal article" date="2021" name="Nature">
        <title>Structural basis of human transcription-DNA repair coupling.</title>
        <authorList>
            <person name="Kokic G."/>
            <person name="Wagner F.R."/>
            <person name="Chernev A."/>
            <person name="Urlaub H."/>
            <person name="Cramer P."/>
        </authorList>
    </citation>
    <scope>UBIQUITINATION AT LYS-1268</scope>
</reference>
<reference key="68">
    <citation type="journal article" date="2022" name="DNA Repair">
        <title>UBAP2/UBAP2L regulate UV-induced ubiquitylation of RNA polymerase II and are the human orthologues of yeast Def1.</title>
        <authorList>
            <person name="Herlihy A.E."/>
            <person name="Boeing S."/>
            <person name="Weems J.C."/>
            <person name="Walker J."/>
            <person name="Dirac-Svejstrup A.B."/>
            <person name="Lehner M.H."/>
            <person name="Conaway R.C."/>
            <person name="Conaway J.W."/>
            <person name="Svejstrup J.Q."/>
        </authorList>
    </citation>
    <scope>UBIQUITINATION</scope>
</reference>
<reference key="69">
    <citation type="journal article" date="2022" name="Nucleic Acids Res.">
        <title>ARMC5 is part of an RPB1-specific ubiquitin ligase implicated in adrenal hyperplasia.</title>
        <authorList>
            <person name="Lao L."/>
            <person name="Bourdeau I."/>
            <person name="Gagliardi L."/>
            <person name="He X."/>
            <person name="Shi W."/>
            <person name="Hao B."/>
            <person name="Tan M."/>
            <person name="Hu Y."/>
            <person name="Peng J."/>
            <person name="Coulombe B."/>
            <person name="Torpy D.J."/>
            <person name="Scott H.S."/>
            <person name="Lacroix A."/>
            <person name="Luo H."/>
            <person name="Wu J."/>
        </authorList>
    </citation>
    <scope>UBIQUITINATION</scope>
</reference>
<reference key="70">
    <citation type="journal article" date="2023" name="Mol. Cell">
        <title>INTAC endonuclease and phosphatase modules differentially regulate transcription by RNA polymerase II.</title>
        <authorList>
            <person name="Hu S."/>
            <person name="Peng L."/>
            <person name="Song A."/>
            <person name="Ji Y.X."/>
            <person name="Cheng J."/>
            <person name="Wang M."/>
            <person name="Chen F.X."/>
        </authorList>
    </citation>
    <scope>DEPHOSPHORYLATION BY THE INTAC COMPLEX</scope>
</reference>
<reference key="71">
    <citation type="journal article" date="2024" name="Mol. Cell">
        <title>Redundant pathways for removal of defective RNA polymerase II complexes at a promoter-proximal pause checkpoint.</title>
        <authorList>
            <person name="Blears D."/>
            <person name="Lou J."/>
            <person name="Fong N."/>
            <person name="Mitter R."/>
            <person name="Sheridan R.M."/>
            <person name="He D."/>
            <person name="Dirac-Svejstrup A.B."/>
            <person name="Bentley D."/>
            <person name="Svejstrup J.Q."/>
        </authorList>
    </citation>
    <scope>UBIQUITINATION</scope>
</reference>
<reference key="72">
    <citation type="journal article" date="2024" name="Mol. Cell">
        <title>CRL3ARMC5 ubiquitin ligase and Integrator phosphatase form parallel mechanisms to control early stages of RNA Pol II transcription.</title>
        <authorList>
            <person name="Cacioppo R."/>
            <person name="Gillis A."/>
            <person name="Shlamovitz I."/>
            <person name="Zeller A."/>
            <person name="Castiblanco D."/>
            <person name="Crisp A."/>
            <person name="Haworth B."/>
            <person name="Arabiotorre A."/>
            <person name="Abyaneh P."/>
            <person name="Bao Y."/>
            <person name="Sale J.E."/>
            <person name="Berry S."/>
            <person name="Tufegdzic Vidakovic A."/>
        </authorList>
    </citation>
    <scope>UBIQUITINATION</scope>
    <scope>MUTAGENESIS OF LYS-1268</scope>
</reference>
<reference key="73">
    <citation type="journal article" date="2006" name="Mol. Cell">
        <title>Determinants for dephosphorylation of the RNA polymerase II C-terminal domain by Scp1.</title>
        <authorList>
            <person name="Zhang Y."/>
            <person name="Kim Y."/>
            <person name="Genoud N."/>
            <person name="Gao J."/>
            <person name="Kelly J.W."/>
            <person name="Pfaff S.L."/>
            <person name="Gill G.N."/>
            <person name="Dixon J.E."/>
            <person name="Noel J.P."/>
        </authorList>
    </citation>
    <scope>X-RAY CRYSTALLOGRAPHY (1.8 ANGSTROMS) OF 1796-1803 IN COMPLEX WITH CTDSP1</scope>
    <scope>DEPHOSPHORYLATION</scope>
</reference>
<reference key="74">
    <citation type="journal article" date="2013" name="Nat. Struct. Mol. Biol.">
        <title>Structural mimicry in transcription regulation of human RNA polymerase II by the DNA helicase RECQL5.</title>
        <authorList>
            <person name="Kassube S.A."/>
            <person name="Jinek M."/>
            <person name="Fang J."/>
            <person name="Tsutakawa S."/>
            <person name="Nogales E."/>
        </authorList>
    </citation>
    <scope>STRUCTURE BY ELECTRON MICROSCOPY IN COMPLEX WITH RECQL5</scope>
    <scope>INTERACTION WITH RECQL5 AND TCEA1</scope>
    <scope>SUBUNIT</scope>
    <scope>FUNCTION</scope>
    <scope>CATALYTIC ACTIVITY</scope>
</reference>
<reference key="75">
    <citation type="journal article" date="2016" name="Nature">
        <title>Near-atomic resolution visualization of human transcription promoter opening.</title>
        <authorList>
            <person name="He Y."/>
            <person name="Yan C."/>
            <person name="Fang J."/>
            <person name="Inouye C."/>
            <person name="Tjian R."/>
            <person name="Ivanov I."/>
            <person name="Nogales E."/>
        </authorList>
    </citation>
    <scope>STRUCTURE BY ELECTRON MICROSCOPY (3.90 ANGSTROMS) IN COMPLEX WITH ZN(2+) AND MG(2+)</scope>
    <scope>FUNCTION</scope>
    <scope>CATALYTIC ACTIVITY</scope>
    <scope>COFACTOR</scope>
    <scope>SUBUNIT</scope>
</reference>
<reference key="76">
    <citation type="journal article" date="2018" name="Nat. Struct. Mol. Biol.">
        <title>Architecture of Pol II(G) and molecular mechanism of transcription regulation by Gdown1.</title>
        <authorList>
            <person name="Jishage M."/>
            <person name="Yu X."/>
            <person name="Shi Y."/>
            <person name="Ganesan S.J."/>
            <person name="Chen W.Y."/>
            <person name="Sali A."/>
            <person name="Chait B.T."/>
            <person name="Asturias F.J."/>
            <person name="Roeder R.G."/>
        </authorList>
    </citation>
    <scope>STRUCTURE BY ELECTRON MICROSCOPY (3.90 ANGSTROMS)</scope>
    <scope>FUNCTION</scope>
    <scope>CATALYTIC ACTIVITY</scope>
    <scope>SUBUNIT</scope>
</reference>
<reference evidence="75" key="77">
    <citation type="journal article" date="2023" name="Protein Cell">
        <title>Structural basis of INTAC-regulated transcription.</title>
        <authorList>
            <person name="Zheng H."/>
            <person name="Jin Q."/>
            <person name="Wang X."/>
            <person name="Qi Y."/>
            <person name="Liu W."/>
            <person name="Ren Y."/>
            <person name="Zhao D."/>
            <person name="Xavier Chen F."/>
            <person name="Cheng J."/>
            <person name="Chen X."/>
            <person name="Xu Y."/>
        </authorList>
    </citation>
    <scope>STRUCTURE BY ELECTRON MICROSCOPY (4.18 ANGSTROMS) IN COMPLEX WITH THE INTAC COMPLEX</scope>
</reference>
<reference key="78">
    <citation type="journal article" date="2019" name="Am. J. Hum. Genet.">
        <title>De Novo Heterozygous POLR2A Variants Cause a Neurodevelopmental Syndrome with Profound Infantile-Onset Hypotonia.</title>
        <authorList>
            <person name="Haijes H.A."/>
            <person name="Koster M.J.E."/>
            <person name="Rehmann H."/>
            <person name="Li D."/>
            <person name="Hakonarson H."/>
            <person name="Cappuccio G."/>
            <person name="Hancarova M."/>
            <person name="Lehalle D."/>
            <person name="Reardon W."/>
            <person name="Schaefer G.B."/>
            <person name="Lehman A."/>
            <person name="van de Laar I.M.B.H."/>
            <person name="Tesselaar C.D."/>
            <person name="Turner C."/>
            <person name="Goldenberg A."/>
            <person name="Patrier S."/>
            <person name="Thevenon J."/>
            <person name="Pinelli M."/>
            <person name="Brunetti-Pierri N."/>
            <person name="Prchalova D."/>
            <person name="Havlovicova M."/>
            <person name="Vlckova M."/>
            <person name="Sedlacek Z."/>
            <person name="Lopez E."/>
            <person name="Ragoussis V."/>
            <person name="Pagnamenta A.T."/>
            <person name="Kini U."/>
            <person name="Vos H.R."/>
            <person name="van Es R.M."/>
            <person name="van Schaik R.F.M.A."/>
            <person name="van Essen T.A.J."/>
            <person name="Kibaek M."/>
            <person name="Taylor J.C."/>
            <person name="Sullivan J."/>
            <person name="Shashi V."/>
            <person name="Petrovski S."/>
            <person name="Fagerberg C."/>
            <person name="Martin D.M."/>
            <person name="van Gassen K.L.I."/>
            <person name="Pfundt R."/>
            <person name="Falk M.J."/>
            <person name="McCormick E.M."/>
            <person name="Timmers H.T.M."/>
            <person name="van Hasselt P.M."/>
        </authorList>
    </citation>
    <scope>INVOLVEMENT IN NEDHIB</scope>
    <scope>VARIANTS NEDHIB LEU-371; THR-457; SER-531; TYR-669 DEL; 700-GLN--ASN-1970 DEL; 735-GLN--ASN-1970 DEL; MET-736; SER-755 DEL; THR-769; THR-848; HIS-1109; PRO-1124; LYS-1125 DEL; SER-1251 AND HIS-1603</scope>
    <scope>CHARACTERIZATION OF VARIANTS NEDHIB THR-457; SER-531; MET-736; SER-755 DEL; PRO-1124; SER-1251 AND HIS-1603</scope>
    <scope>MUTAGENESIS OF 812-LYS--ASN-1970</scope>
</reference>
<organism>
    <name type="scientific">Homo sapiens</name>
    <name type="common">Human</name>
    <dbReference type="NCBI Taxonomy" id="9606"/>
    <lineage>
        <taxon>Eukaryota</taxon>
        <taxon>Metazoa</taxon>
        <taxon>Chordata</taxon>
        <taxon>Craniata</taxon>
        <taxon>Vertebrata</taxon>
        <taxon>Euteleostomi</taxon>
        <taxon>Mammalia</taxon>
        <taxon>Eutheria</taxon>
        <taxon>Euarchontoglires</taxon>
        <taxon>Primates</taxon>
        <taxon>Haplorrhini</taxon>
        <taxon>Catarrhini</taxon>
        <taxon>Hominidae</taxon>
        <taxon>Homo</taxon>
    </lineage>
</organism>
<name>RPB1_HUMAN</name>
<protein>
    <recommendedName>
        <fullName evidence="69">DNA-directed RNA polymerase II subunit RPB1</fullName>
        <shortName>RNA polymerase II subunit B1</shortName>
        <ecNumber evidence="38 46 50 66">2.7.7.6</ecNumber>
    </recommendedName>
    <alternativeName>
        <fullName>3'-5' exoribonuclease</fullName>
        <ecNumber evidence="64">3.1.13.-</ecNumber>
    </alternativeName>
    <alternativeName>
        <fullName>DNA-directed RNA polymerase II subunit A</fullName>
    </alternativeName>
    <alternativeName>
        <fullName>DNA-directed RNA polymerase III largest subunit</fullName>
    </alternativeName>
    <alternativeName>
        <fullName>RNA-directed RNA polymerase II subunit RPB1</fullName>
        <ecNumber evidence="36">2.7.7.48</ecNumber>
    </alternativeName>
</protein>
<feature type="chain" id="PRO_0000073940" description="DNA-directed RNA polymerase II subunit RPB1">
    <location>
        <begin position="1"/>
        <end position="1970"/>
    </location>
</feature>
<feature type="repeat" description="1" evidence="4">
    <location>
        <begin position="1593"/>
        <end position="1599"/>
    </location>
</feature>
<feature type="repeat" description="2; approximate" evidence="4">
    <location>
        <begin position="1600"/>
        <end position="1606"/>
    </location>
</feature>
<feature type="repeat" description="3" evidence="4">
    <location>
        <begin position="1608"/>
        <end position="1614"/>
    </location>
</feature>
<feature type="repeat" description="4" evidence="4">
    <location>
        <begin position="1615"/>
        <end position="1621"/>
    </location>
</feature>
<feature type="repeat" description="5" evidence="4">
    <location>
        <begin position="1622"/>
        <end position="1628"/>
    </location>
</feature>
<feature type="repeat" description="6" evidence="4">
    <location>
        <begin position="1629"/>
        <end position="1635"/>
    </location>
</feature>
<feature type="repeat" description="7" evidence="4">
    <location>
        <begin position="1636"/>
        <end position="1642"/>
    </location>
</feature>
<feature type="repeat" description="8" evidence="4">
    <location>
        <begin position="1643"/>
        <end position="1649"/>
    </location>
</feature>
<feature type="repeat" description="9" evidence="4">
    <location>
        <begin position="1650"/>
        <end position="1656"/>
    </location>
</feature>
<feature type="repeat" description="10" evidence="4">
    <location>
        <begin position="1657"/>
        <end position="1663"/>
    </location>
</feature>
<feature type="repeat" description="11" evidence="4">
    <location>
        <begin position="1664"/>
        <end position="1670"/>
    </location>
</feature>
<feature type="repeat" description="12" evidence="4">
    <location>
        <begin position="1671"/>
        <end position="1677"/>
    </location>
</feature>
<feature type="repeat" description="13" evidence="4">
    <location>
        <begin position="1678"/>
        <end position="1684"/>
    </location>
</feature>
<feature type="repeat" description="14" evidence="4">
    <location>
        <begin position="1685"/>
        <end position="1691"/>
    </location>
</feature>
<feature type="repeat" description="15" evidence="4">
    <location>
        <begin position="1692"/>
        <end position="1698"/>
    </location>
</feature>
<feature type="repeat" description="16" evidence="4">
    <location>
        <begin position="1699"/>
        <end position="1705"/>
    </location>
</feature>
<feature type="repeat" description="17" evidence="4">
    <location>
        <begin position="1706"/>
        <end position="1712"/>
    </location>
</feature>
<feature type="repeat" description="18" evidence="4">
    <location>
        <begin position="1713"/>
        <end position="1719"/>
    </location>
</feature>
<feature type="repeat" description="19" evidence="4">
    <location>
        <begin position="1720"/>
        <end position="1726"/>
    </location>
</feature>
<feature type="repeat" description="20" evidence="4">
    <location>
        <begin position="1727"/>
        <end position="1733"/>
    </location>
</feature>
<feature type="repeat" description="21" evidence="4">
    <location>
        <begin position="1734"/>
        <end position="1740"/>
    </location>
</feature>
<feature type="repeat" description="22" evidence="4">
    <location>
        <begin position="1741"/>
        <end position="1747"/>
    </location>
</feature>
<feature type="repeat" description="23" evidence="4">
    <location>
        <begin position="1748"/>
        <end position="1754"/>
    </location>
</feature>
<feature type="repeat" description="24" evidence="4">
    <location>
        <begin position="1755"/>
        <end position="1761"/>
    </location>
</feature>
<feature type="repeat" description="25" evidence="4">
    <location>
        <begin position="1762"/>
        <end position="1768"/>
    </location>
</feature>
<feature type="repeat" description="26" evidence="4">
    <location>
        <begin position="1769"/>
        <end position="1775"/>
    </location>
</feature>
<feature type="repeat" description="27" evidence="4">
    <location>
        <begin position="1776"/>
        <end position="1782"/>
    </location>
</feature>
<feature type="repeat" description="28" evidence="4">
    <location>
        <begin position="1783"/>
        <end position="1789"/>
    </location>
</feature>
<feature type="repeat" description="29" evidence="4">
    <location>
        <begin position="1790"/>
        <end position="1796"/>
    </location>
</feature>
<feature type="repeat" description="30" evidence="4">
    <location>
        <begin position="1797"/>
        <end position="1803"/>
    </location>
</feature>
<feature type="repeat" description="31" evidence="4">
    <location>
        <begin position="1804"/>
        <end position="1810"/>
    </location>
</feature>
<feature type="repeat" description="32" evidence="4">
    <location>
        <begin position="1811"/>
        <end position="1817"/>
    </location>
</feature>
<feature type="repeat" description="33" evidence="4">
    <location>
        <begin position="1818"/>
        <end position="1824"/>
    </location>
</feature>
<feature type="repeat" description="34" evidence="4">
    <location>
        <begin position="1825"/>
        <end position="1831"/>
    </location>
</feature>
<feature type="repeat" description="35" evidence="4">
    <location>
        <begin position="1832"/>
        <end position="1838"/>
    </location>
</feature>
<feature type="repeat" description="36" evidence="4">
    <location>
        <begin position="1839"/>
        <end position="1845"/>
    </location>
</feature>
<feature type="repeat" description="37" evidence="4">
    <location>
        <begin position="1846"/>
        <end position="1852"/>
    </location>
</feature>
<feature type="repeat" description="38" evidence="4">
    <location>
        <begin position="1853"/>
        <end position="1859"/>
    </location>
</feature>
<feature type="repeat" description="39" evidence="4">
    <location>
        <begin position="1860"/>
        <end position="1866"/>
    </location>
</feature>
<feature type="repeat" description="40" evidence="4">
    <location>
        <begin position="1867"/>
        <end position="1873"/>
    </location>
</feature>
<feature type="repeat" description="41" evidence="4">
    <location>
        <begin position="1874"/>
        <end position="1880"/>
    </location>
</feature>
<feature type="repeat" description="42" evidence="4">
    <location>
        <begin position="1881"/>
        <end position="1887"/>
    </location>
</feature>
<feature type="repeat" description="43" evidence="4">
    <location>
        <begin position="1888"/>
        <end position="1894"/>
    </location>
</feature>
<feature type="repeat" description="44" evidence="4">
    <location>
        <begin position="1895"/>
        <end position="1901"/>
    </location>
</feature>
<feature type="repeat" description="45" evidence="4">
    <location>
        <begin position="1902"/>
        <end position="1908"/>
    </location>
</feature>
<feature type="repeat" description="46" evidence="4">
    <location>
        <begin position="1909"/>
        <end position="1915"/>
    </location>
</feature>
<feature type="repeat" description="47" evidence="4">
    <location>
        <begin position="1916"/>
        <end position="1922"/>
    </location>
</feature>
<feature type="repeat" description="48" evidence="4">
    <location>
        <begin position="1923"/>
        <end position="1929"/>
    </location>
</feature>
<feature type="repeat" description="49" evidence="4">
    <location>
        <begin position="1930"/>
        <end position="1936"/>
    </location>
</feature>
<feature type="repeat" description="50" evidence="4">
    <location>
        <begin position="1940"/>
        <end position="1946"/>
    </location>
</feature>
<feature type="repeat" description="51; approximate" evidence="4">
    <location>
        <begin position="1947"/>
        <end position="1953"/>
    </location>
</feature>
<feature type="repeat" description="52; approximate" evidence="4">
    <location>
        <begin position="1954"/>
        <end position="1960"/>
    </location>
</feature>
<feature type="region of interest" description="Bridging helix" evidence="1">
    <location>
        <begin position="832"/>
        <end position="873"/>
    </location>
</feature>
<feature type="region of interest" description="Trigger loop" evidence="1">
    <location>
        <begin position="1083"/>
        <end position="1124"/>
    </location>
</feature>
<feature type="region of interest" description="Disordered" evidence="5">
    <location>
        <begin position="1546"/>
        <end position="1970"/>
    </location>
</feature>
<feature type="region of interest" description="C-terminal domain (CTD); 52 X 7 AA approximate tandem repeats of Y-[ST]-P-[STQ]-[ST]-P-[SRTEVKGN]">
    <location>
        <begin position="1593"/>
        <end position="1960"/>
    </location>
</feature>
<feature type="compositionally biased region" description="Low complexity" evidence="5">
    <location>
        <begin position="1546"/>
        <end position="1568"/>
    </location>
</feature>
<feature type="compositionally biased region" description="Pro residues" evidence="5">
    <location>
        <begin position="1569"/>
        <end position="1583"/>
    </location>
</feature>
<feature type="compositionally biased region" description="Low complexity" evidence="5">
    <location>
        <begin position="1608"/>
        <end position="1959"/>
    </location>
</feature>
<feature type="binding site" evidence="1">
    <location>
        <position position="67"/>
    </location>
    <ligand>
        <name>RNA</name>
        <dbReference type="ChEBI" id="CHEBI:33697"/>
    </ligand>
</feature>
<feature type="binding site" evidence="46 74">
    <location>
        <position position="71"/>
    </location>
    <ligand>
        <name>Zn(2+)</name>
        <dbReference type="ChEBI" id="CHEBI:29105"/>
        <label>1</label>
    </ligand>
</feature>
<feature type="binding site" evidence="46 74">
    <location>
        <position position="74"/>
    </location>
    <ligand>
        <name>Zn(2+)</name>
        <dbReference type="ChEBI" id="CHEBI:29105"/>
        <label>1</label>
    </ligand>
</feature>
<feature type="binding site" evidence="46 74">
    <location>
        <position position="81"/>
    </location>
    <ligand>
        <name>Zn(2+)</name>
        <dbReference type="ChEBI" id="CHEBI:29105"/>
        <label>1</label>
    </ligand>
</feature>
<feature type="binding site" evidence="46 74">
    <location>
        <position position="84"/>
    </location>
    <ligand>
        <name>Zn(2+)</name>
        <dbReference type="ChEBI" id="CHEBI:29105"/>
        <label>1</label>
    </ligand>
</feature>
<feature type="binding site" evidence="46 74">
    <location>
        <position position="111"/>
    </location>
    <ligand>
        <name>Zn(2+)</name>
        <dbReference type="ChEBI" id="CHEBI:29105"/>
        <label>2</label>
    </ligand>
</feature>
<feature type="binding site" evidence="46 74">
    <location>
        <position position="114"/>
    </location>
    <ligand>
        <name>Zn(2+)</name>
        <dbReference type="ChEBI" id="CHEBI:29105"/>
        <label>2</label>
    </ligand>
</feature>
<feature type="binding site" evidence="46 74">
    <location>
        <position position="154"/>
    </location>
    <ligand>
        <name>Zn(2+)</name>
        <dbReference type="ChEBI" id="CHEBI:29105"/>
        <label>2</label>
    </ligand>
</feature>
<feature type="binding site" evidence="46 74">
    <location>
        <position position="184"/>
    </location>
    <ligand>
        <name>Zn(2+)</name>
        <dbReference type="ChEBI" id="CHEBI:29105"/>
        <label>2</label>
    </ligand>
</feature>
<feature type="binding site" evidence="1">
    <location>
        <position position="346"/>
    </location>
    <ligand>
        <name>DNA</name>
        <dbReference type="ChEBI" id="CHEBI:16991"/>
        <label>template strand</label>
    </ligand>
</feature>
<feature type="binding site" evidence="1">
    <location>
        <position position="358"/>
    </location>
    <ligand>
        <name>DNA</name>
        <dbReference type="ChEBI" id="CHEBI:16991"/>
        <label>template strand</label>
    </ligand>
</feature>
<feature type="binding site" evidence="1">
    <location>
        <position position="460"/>
    </location>
    <ligand>
        <name>RNA</name>
        <dbReference type="ChEBI" id="CHEBI:33697"/>
    </ligand>
</feature>
<feature type="binding site" evidence="46 74">
    <location>
        <position position="493"/>
    </location>
    <ligand>
        <name>Mg(2+)</name>
        <dbReference type="ChEBI" id="CHEBI:18420"/>
        <label>1</label>
        <note>catalytic</note>
    </ligand>
</feature>
<feature type="binding site" evidence="46 74">
    <location>
        <position position="495"/>
    </location>
    <ligand>
        <name>Mg(2+)</name>
        <dbReference type="ChEBI" id="CHEBI:18420"/>
        <label>1</label>
        <note>catalytic</note>
    </ligand>
</feature>
<feature type="binding site" evidence="46 74">
    <location>
        <position position="495"/>
    </location>
    <ligand>
        <name>Mg(2+)</name>
        <dbReference type="ChEBI" id="CHEBI:18420"/>
        <label>2</label>
        <note>ligand shared with POLR2B/RPB2</note>
    </ligand>
</feature>
<feature type="binding site" evidence="1">
    <location>
        <position position="497"/>
    </location>
    <ligand>
        <name>Mg(2+)</name>
        <dbReference type="ChEBI" id="CHEBI:18420"/>
        <label>1</label>
        <note>catalytic</note>
    </ligand>
</feature>
<feature type="binding site" evidence="2">
    <location>
        <position position="497"/>
    </location>
    <ligand>
        <name>Mg(2+)</name>
        <dbReference type="ChEBI" id="CHEBI:18420"/>
        <label>2</label>
        <note>ligand shared with POLR2B/RPB2</note>
    </ligand>
</feature>
<feature type="binding site" evidence="46 74">
    <location>
        <position position="499"/>
    </location>
    <ligand>
        <name>Mg(2+)</name>
        <dbReference type="ChEBI" id="CHEBI:18420"/>
        <label>1</label>
        <note>catalytic</note>
    </ligand>
</feature>
<feature type="binding site" evidence="1">
    <location>
        <position position="499"/>
    </location>
    <ligand>
        <name>RNA</name>
        <dbReference type="ChEBI" id="CHEBI:33697"/>
    </ligand>
</feature>
<feature type="binding site" evidence="1">
    <location>
        <position position="1416"/>
    </location>
    <ligand>
        <name>DNA</name>
        <dbReference type="ChEBI" id="CHEBI:16991"/>
        <label>template strand</label>
    </ligand>
</feature>
<feature type="binding site" evidence="1">
    <location>
        <position position="1421"/>
    </location>
    <ligand>
        <name>DNA</name>
        <dbReference type="ChEBI" id="CHEBI:16991"/>
        <label>nontemplate strand</label>
    </ligand>
</feature>
<feature type="modified residue" description="N-acetylmethionine" evidence="78">
    <location>
        <position position="1"/>
    </location>
</feature>
<feature type="modified residue" description="Phosphoserine" evidence="81">
    <location>
        <position position="27"/>
    </location>
</feature>
<feature type="modified residue" description="Phosphoserine" evidence="81">
    <location>
        <position position="217"/>
    </location>
</feature>
<feature type="modified residue" description="Omega-N-methylated arginine; by CARM1; in vitro" evidence="45">
    <location>
        <position position="1603"/>
    </location>
</feature>
<feature type="modified residue" description="Asymmetric dimethylarginine; alternate; by CARM1" evidence="30 45">
    <location>
        <position position="1810"/>
    </location>
</feature>
<feature type="modified residue" description="Symmetric dimethylarginine; alternate; by PRMT5" evidence="45">
    <location>
        <position position="1810"/>
    </location>
</feature>
<feature type="modified residue" description="N6,N6-dimethyllysine; alternate" evidence="3">
    <location>
        <position position="1838"/>
    </location>
</feature>
<feature type="modified residue" description="N6-methyllysine; alternate" evidence="3">
    <location>
        <position position="1838"/>
    </location>
</feature>
<feature type="modified residue" description="Phosphothreonine" evidence="43">
    <location>
        <position position="1840"/>
    </location>
</feature>
<feature type="modified residue" description="Phosphoserine" evidence="43 79">
    <location>
        <position position="1843"/>
    </location>
</feature>
<feature type="modified residue" description="Phosphoserine" evidence="43">
    <location>
        <position position="1845"/>
    </location>
</feature>
<feature type="modified residue" description="Phosphoserine" evidence="3">
    <location>
        <position position="1847"/>
    </location>
</feature>
<feature type="modified residue" description="Phosphoserine" evidence="43 77">
    <location>
        <position position="1849"/>
    </location>
</feature>
<feature type="modified residue" description="Phosphoserine" evidence="43 81">
    <location>
        <position position="1850"/>
    </location>
</feature>
<feature type="modified residue" description="Phosphothreonine" evidence="79">
    <location>
        <position position="1854"/>
    </location>
</feature>
<feature type="modified residue" description="Phosphoserine" evidence="43">
    <location>
        <position position="1857"/>
    </location>
</feature>
<feature type="modified residue" description="N6,N6-dimethyllysine; alternate" evidence="43">
    <location>
        <position position="1859"/>
    </location>
</feature>
<feature type="modified residue" description="N6-methyllysine; alternate" evidence="43">
    <location>
        <position position="1859"/>
    </location>
</feature>
<feature type="modified residue" description="Phosphotyrosine" evidence="43">
    <location>
        <position position="1860"/>
    </location>
</feature>
<feature type="modified residue" description="Phosphoserine" evidence="43">
    <location>
        <position position="1861"/>
    </location>
</feature>
<feature type="modified residue" description="Phosphothreonine" evidence="43">
    <location>
        <position position="1863"/>
    </location>
</feature>
<feature type="modified residue" description="Phosphoserine" evidence="43 81">
    <location>
        <position position="1864"/>
    </location>
</feature>
<feature type="modified residue" description="N6,N6,N6-trimethyllysine; alternate" evidence="43">
    <location>
        <position position="1866"/>
    </location>
</feature>
<feature type="modified residue" description="N6,N6-dimethyllysine; alternate" evidence="43">
    <location>
        <position position="1866"/>
    </location>
</feature>
<feature type="modified residue" description="N6-acetyllysine; alternate" evidence="43">
    <location>
        <position position="1866"/>
    </location>
</feature>
<feature type="modified residue" description="N6-methyllysine; alternate" evidence="43">
    <location>
        <position position="1866"/>
    </location>
</feature>
<feature type="modified residue" description="Phosphotyrosine" evidence="43">
    <location>
        <position position="1867"/>
    </location>
</feature>
<feature type="modified residue" description="Phosphoserine" evidence="81">
    <location>
        <position position="1868"/>
    </location>
</feature>
<feature type="modified residue" description="Phosphothreonine" evidence="43">
    <location>
        <position position="1870"/>
    </location>
</feature>
<feature type="modified residue" description="N6,N6,N6-trimethyllysine; alternate" evidence="43">
    <location>
        <position position="1873"/>
    </location>
</feature>
<feature type="modified residue" description="N6,N6-dimethyllysine; alternate" evidence="3">
    <location>
        <position position="1873"/>
    </location>
</feature>
<feature type="modified residue" description="N6-methyllysine; alternate" evidence="43">
    <location>
        <position position="1873"/>
    </location>
</feature>
<feature type="modified residue" description="Phosphotyrosine" evidence="43 77 82">
    <location>
        <position position="1874"/>
    </location>
</feature>
<feature type="modified residue" description="Phosphoserine" evidence="43">
    <location>
        <position position="1875"/>
    </location>
</feature>
<feature type="modified residue" description="Phosphothreonine" evidence="43">
    <location>
        <position position="1877"/>
    </location>
</feature>
<feature type="modified residue" description="Phosphoserine" evidence="43 79 81">
    <location>
        <position position="1878"/>
    </location>
</feature>
<feature type="modified residue" description="Phosphotyrosine" evidence="43">
    <location>
        <position position="1881"/>
    </location>
</feature>
<feature type="modified residue" description="Phosphoserine" evidence="43 79 81">
    <location>
        <position position="1882"/>
    </location>
</feature>
<feature type="modified residue" description="Phosphothreonine" evidence="81">
    <location>
        <position position="1885"/>
    </location>
</feature>
<feature type="modified residue" description="N6,N6-dimethyllysine; alternate" evidence="3">
    <location>
        <position position="1887"/>
    </location>
</feature>
<feature type="modified residue" description="N6-acetyllysine; alternate" evidence="43">
    <location>
        <position position="1887"/>
    </location>
</feature>
<feature type="modified residue" description="N6-methyllysine; alternate" evidence="43">
    <location>
        <position position="1887"/>
    </location>
</feature>
<feature type="modified residue" description="Phosphothreonine" evidence="3">
    <location>
        <position position="1894"/>
    </location>
</feature>
<feature type="modified residue" description="Phosphoserine" evidence="77">
    <location>
        <position position="1896"/>
    </location>
</feature>
<feature type="modified residue" description="Phosphoserine" evidence="79 81">
    <location>
        <position position="1899"/>
    </location>
</feature>
<feature type="modified residue" description="Phosphoserine" evidence="82">
    <location>
        <position position="1906"/>
    </location>
</feature>
<feature type="modified residue" description="N6,N6-dimethyllysine" evidence="3">
    <location>
        <position position="1908"/>
    </location>
</feature>
<feature type="modified residue" description="Phosphotyrosine" evidence="43 76 77 82">
    <location>
        <position position="1909"/>
    </location>
</feature>
<feature type="modified residue" description="Phosphothreonine" evidence="43">
    <location>
        <position position="1912"/>
    </location>
</feature>
<feature type="modified residue" description="Phosphoserine" evidence="43 77 79 81">
    <location>
        <position position="1913"/>
    </location>
</feature>
<feature type="modified residue" description="Phosphothreonine" evidence="43">
    <location>
        <position position="1915"/>
    </location>
</feature>
<feature type="modified residue" description="Phosphotyrosine" evidence="43">
    <location>
        <position position="1916"/>
    </location>
</feature>
<feature type="modified residue" description="Phosphoserine" evidence="43 79 80">
    <location>
        <position position="1917"/>
    </location>
</feature>
<feature type="modified residue" description="Phosphothreonine" evidence="43">
    <location>
        <position position="1919"/>
    </location>
</feature>
<feature type="modified residue" description="Phosphoserine" evidence="43 77 79 81">
    <location>
        <position position="1920"/>
    </location>
</feature>
<feature type="modified residue" description="N6,N6-dimethyllysine; alternate" evidence="3">
    <location>
        <position position="1922"/>
    </location>
</feature>
<feature type="modified residue" description="N6-acetyllysine; alternate" evidence="70">
    <location>
        <position position="1922"/>
    </location>
</feature>
<feature type="modified residue" description="N6-methyllysine; alternate" evidence="70">
    <location>
        <position position="1922"/>
    </location>
</feature>
<feature type="modified residue" description="Phosphotyrosine" evidence="43 76 77 82">
    <location>
        <position position="1923"/>
    </location>
</feature>
<feature type="modified residue" description="Phosphothreonine" evidence="43">
    <location>
        <position position="1926"/>
    </location>
</feature>
<feature type="modified residue" description="Phosphoserine" evidence="43 77 79 81">
    <location>
        <position position="1927"/>
    </location>
</feature>
<feature type="modified residue" description="Phosphothreonine" evidence="43">
    <location>
        <position position="1929"/>
    </location>
</feature>
<feature type="modified residue" description="Phosphotyrosine" evidence="43">
    <location>
        <position position="1930"/>
    </location>
</feature>
<feature type="modified residue" description="Phosphoserine" evidence="43 79 80">
    <location>
        <position position="1931"/>
    </location>
</feature>
<feature type="modified residue" description="Phosphothreonine" evidence="43">
    <location>
        <position position="1933"/>
    </location>
</feature>
<feature type="modified residue" description="Phosphoserine" evidence="77 79 81">
    <location>
        <position position="1934"/>
    </location>
</feature>
<feature type="modified residue" description="N6,N6-dimethyllysine; alternate" evidence="3">
    <location>
        <position position="1936"/>
    </location>
</feature>
<feature type="modified residue" description="N6-acetyllysine; alternate" evidence="70">
    <location>
        <position position="1936"/>
    </location>
</feature>
<feature type="modified residue" description="N6-methyllysine; alternate" evidence="70">
    <location>
        <position position="1936"/>
    </location>
</feature>
<feature type="cross-link" description="Glycyl lysine isopeptide (Lys-Gly) (interchain with G-Cter in ubiquitin); by NEDD4" evidence="53 71">
    <location>
        <position position="1268"/>
    </location>
</feature>
<feature type="splice variant" id="VSP_056184" description="In isoform 2." evidence="67">
    <original>GEVMNLLMF</original>
    <variation>VCGPNGNLA</variation>
    <location>
        <begin position="558"/>
        <end position="566"/>
    </location>
</feature>
<feature type="splice variant" id="VSP_056185" description="In isoform 2." evidence="67">
    <location>
        <begin position="567"/>
        <end position="1970"/>
    </location>
</feature>
<feature type="sequence variant" id="VAR_051872" description="In dbSNP:rs2229198.">
    <original>R</original>
    <variation>C</variation>
    <location>
        <position position="292"/>
    </location>
</feature>
<feature type="sequence variant" id="VAR_082988" description="In NEDHIB; uncertain significance; mild." evidence="52">
    <original>P</original>
    <variation>L</variation>
    <location>
        <position position="371"/>
    </location>
</feature>
<feature type="sequence variant" id="VAR_082989" description="In NEDHIB; uncertain significance; severe; no effect on cell viability." evidence="52">
    <original>I</original>
    <variation>T</variation>
    <location>
        <position position="457"/>
    </location>
</feature>
<feature type="sequence variant" id="VAR_082990" description="In NEDHIB; uncertain significance; no effect on cell viability." evidence="52">
    <original>N</original>
    <variation>S</variation>
    <location>
        <position position="531"/>
    </location>
</feature>
<feature type="sequence variant" id="VAR_082991" description="In NEDHIB; moderate." evidence="52">
    <location>
        <position position="669"/>
    </location>
</feature>
<feature type="sequence variant" id="VAR_082992" description="In NEDHIB; mild." evidence="52">
    <location>
        <begin position="700"/>
        <end position="1970"/>
    </location>
</feature>
<feature type="sequence variant" id="VAR_082993" description="In NEDHIB; mild." evidence="52">
    <location>
        <begin position="735"/>
        <end position="1970"/>
    </location>
</feature>
<feature type="sequence variant" id="VAR_082994" description="In NEDHIB; profound; decreased cell viability." evidence="52">
    <original>T</original>
    <variation>M</variation>
    <location>
        <position position="736"/>
    </location>
</feature>
<feature type="sequence variant" id="VAR_082995" description="In NEDHIB; uncertain significance; mild; decreased cell viability." evidence="52">
    <location>
        <position position="755"/>
    </location>
</feature>
<feature type="sequence variant" id="VAR_082996" description="In NEDHIB; uncertain significance; severe." evidence="52">
    <original>M</original>
    <variation>T</variation>
    <location>
        <position position="769"/>
    </location>
</feature>
<feature type="sequence variant" id="VAR_082997" description="In NEDHIB; uncertain significance; moderate." evidence="52">
    <original>I</original>
    <variation>T</variation>
    <location>
        <position position="848"/>
    </location>
</feature>
<feature type="sequence variant" id="VAR_082998" description="In NEDHIB; uncertain significance; moderate." evidence="52">
    <original>Y</original>
    <variation>H</variation>
    <location>
        <position position="1109"/>
    </location>
</feature>
<feature type="sequence variant" id="VAR_082999" description="In NEDHIB; mild; decreased cell viability." evidence="52">
    <original>L</original>
    <variation>P</variation>
    <location>
        <position position="1124"/>
    </location>
</feature>
<feature type="sequence variant" id="VAR_083000" description="In NEDHIB; uncertain significance; mild." evidence="52">
    <location>
        <position position="1125"/>
    </location>
</feature>
<feature type="sequence variant" id="VAR_083001" description="In NEDHIB; uncertain significance; severe; no effect on cell viability." evidence="52">
    <original>N</original>
    <variation>S</variation>
    <location>
        <position position="1251"/>
    </location>
</feature>
<feature type="sequence variant" id="VAR_083002" description="In NEDHIB; uncertain significance; moderate; no effect on cell viability." evidence="52">
    <original>R</original>
    <variation>H</variation>
    <location>
        <position position="1603"/>
    </location>
</feature>
<feature type="mutagenesis site" description="Decreases cell viability." evidence="52">
    <location>
        <begin position="812"/>
        <end position="1970"/>
    </location>
</feature>
<feature type="mutagenesis site" description="Impairs ubiquitination, interaction with the TFIIH complex, and its degradation during transcription stress. Does not affect ubiquitination by the BCR(ARMC5) complex." evidence="53 54 63">
    <original>K</original>
    <variation>R</variation>
    <location>
        <position position="1268"/>
    </location>
</feature>
<feature type="mutagenesis site" description="Misexpression of a variety of small nuclear RNAs and small nucleolar RNAs. Loss of interaction with TDRD3 and SMN1/SMN2." evidence="30 45">
    <original>R</original>
    <variation>A</variation>
    <location>
        <position position="1810"/>
    </location>
</feature>
<feature type="mutagenesis site" description="Loss of acetylation and loss of regulation of growth-factor-induced gene expression; when associated with R-1859; R-1866; R-1873; R-1887; R-1908; R-1922 and R-1936." evidence="39">
    <original>K</original>
    <variation>R</variation>
    <location>
        <position position="1838"/>
    </location>
</feature>
<feature type="mutagenesis site" description="Loss of acetylation and loss of regulation of growth-factor-induced gene expression; when associated with R-1838; R-1866; R-1873; R-1887; R-1908; R-1922 and R-1936." evidence="39">
    <original>K</original>
    <variation>R</variation>
    <location>
        <position position="1859"/>
    </location>
</feature>
<feature type="mutagenesis site" description="Loss of acetylation and loss of regulation of growth-factor-induced gene expression; when associated with R-1859; R-1859; R-1873; R-1887; R-1908; R-1922 and R-1936." evidence="39">
    <original>K</original>
    <variation>R</variation>
    <location>
        <position position="1866"/>
    </location>
</feature>
<feature type="mutagenesis site" description="Loss of acetylation and loss of regulation of growth-factor-induced gene expression; when associated with R-1838; R-1859; R-1866; R-1887; R-1908; R-1922 and R-1936." evidence="39">
    <original>K</original>
    <variation>R</variation>
    <location>
        <position position="1873"/>
    </location>
</feature>
<feature type="mutagenesis site" description="Loss of acetylation and loss of regulation of growth-factor-induced gene expression; when associated with R-1838; R-1859; R-1866; R-1873; R-1908; R-1922 and R-1936." evidence="39">
    <original>K</original>
    <variation>R</variation>
    <location>
        <position position="1887"/>
    </location>
</feature>
<feature type="mutagenesis site" description="Loss of acetylation and loss of regulation of growth-factor-induced gene expression; when associated with R.1838; R-1859; R-1866; R-1873; R-1887; R-1922 and R-1936." evidence="39">
    <original>K</original>
    <variation>R</variation>
    <location>
        <position position="1908"/>
    </location>
</feature>
<feature type="mutagenesis site" description="Loss of acetylation and loss of regulation of growth-factor-induced gene expression; when associated with R-1838; R-1859; R-1866; R-1873; R-1887; R-1908 and R-1936." evidence="39">
    <original>K</original>
    <variation>R</variation>
    <location>
        <position position="1922"/>
    </location>
</feature>
<feature type="mutagenesis site" description="Loss of acetylation and loss of regulation of growth-factor-induced gene expression; when associated with R-1838; R-1859; R-1866; R-1873; R-1887; R-1908 and R-1922." evidence="39">
    <original>K</original>
    <variation>R</variation>
    <location>
        <position position="1936"/>
    </location>
</feature>
<feature type="sequence conflict" description="In Ref. 2; CAA52862." evidence="69" ref="2">
    <original>W</original>
    <variation>L</variation>
    <location>
        <position position="1067"/>
    </location>
</feature>
<feature type="sequence conflict" description="In Ref. 2; CAA52862." evidence="69" ref="2">
    <original>D</original>
    <variation>Y</variation>
    <location>
        <position position="1449"/>
    </location>
</feature>
<feature type="sequence conflict" description="In Ref. 1; CAA45125 and 2; CAA52862." evidence="69" ref="1 2">
    <original>A</original>
    <variation>T</variation>
    <location>
        <position position="1835"/>
    </location>
</feature>
<feature type="strand" evidence="85">
    <location>
        <begin position="1708"/>
        <end position="1711"/>
    </location>
</feature>
<feature type="strand" evidence="85">
    <location>
        <begin position="1715"/>
        <end position="1717"/>
    </location>
</feature>
<feature type="helix" evidence="84">
    <location>
        <begin position="1718"/>
        <end position="1720"/>
    </location>
</feature>
<feature type="strand" evidence="83">
    <location>
        <begin position="1722"/>
        <end position="1724"/>
    </location>
</feature>
<feature type="strand" evidence="86">
    <location>
        <begin position="1729"/>
        <end position="1731"/>
    </location>
</feature>